<name>CP2D6_HUMAN</name>
<gene>
    <name evidence="23 30" type="primary">CYP2D6</name>
    <name type="synonym">CYP2DL1</name>
</gene>
<feature type="chain" id="PRO_0000051731" description="Cytochrome P450 2D6">
    <location>
        <begin position="1"/>
        <end position="497"/>
    </location>
</feature>
<feature type="binding site" evidence="24">
    <location>
        <position position="301"/>
    </location>
    <ligand>
        <name>substrate</name>
    </ligand>
</feature>
<feature type="binding site" description="axial binding residue">
    <location>
        <position position="443"/>
    </location>
    <ligand>
        <name>heme</name>
        <dbReference type="ChEBI" id="CHEBI:30413"/>
    </ligand>
    <ligandPart>
        <name>Fe</name>
        <dbReference type="ChEBI" id="CHEBI:18248"/>
    </ligandPart>
</feature>
<feature type="splice variant" id="VSP_044486" description="In isoform 2." evidence="21">
    <location>
        <begin position="118"/>
        <end position="168"/>
    </location>
</feature>
<feature type="sequence variant" id="VAR_072764" description="In allele CYP2D6*87; dbSNP:rs773790593." evidence="14">
    <original>A</original>
    <variation>V</variation>
    <location>
        <position position="5"/>
    </location>
</feature>
<feature type="sequence variant" id="VAR_008366" description="In allele CYP2D6*35; dbSNP:rs769258." evidence="4">
    <original>V</original>
    <variation>M</variation>
    <location>
        <position position="11"/>
    </location>
</feature>
<feature type="sequence variant" id="VAR_072765" description="In dbSNP:rs138417770." evidence="14">
    <original>R</original>
    <variation>Q</variation>
    <location>
        <position position="25"/>
    </location>
</feature>
<feature type="sequence variant" id="VAR_008367" description="In allele CYP2D6*21 and allele CYP2D6*46; dbSNP:rs28371696." evidence="4 6 20">
    <original>R</original>
    <variation>H</variation>
    <location>
        <position position="26"/>
    </location>
</feature>
<feature type="sequence variant" id="VAR_008368" description="In allele CYP2D6*22; dbSNP:rs138100349.">
    <original>R</original>
    <variation>C</variation>
    <location>
        <position position="28"/>
    </location>
</feature>
<feature type="sequence variant" id="VAR_008336" description="In allele CYP2D6*10 and allele CYP2D6*14; poor debrisquone metabolism; dbSNP:rs1065852." evidence="4 14 17">
    <original>P</original>
    <variation>S</variation>
    <location>
        <position position="34"/>
    </location>
</feature>
<feature type="sequence variant" id="VAR_001256" description="In allele CYP2D6*12; impaired metabolism of sparteine; dbSNP:rs5030862." evidence="18">
    <original>G</original>
    <variation>R</variation>
    <location>
        <position position="42"/>
    </location>
</feature>
<feature type="sequence variant" id="VAR_008369" description="In allele CYP2D6*23; dbSNP:rs267608310.">
    <original>A</original>
    <variation>V</variation>
    <location>
        <position position="85"/>
    </location>
</feature>
<feature type="sequence variant" id="VAR_024720" description="In dbSNP:rs28371703." evidence="4">
    <original>L</original>
    <variation>M</variation>
    <location>
        <position position="91"/>
    </location>
</feature>
<feature type="sequence variant" id="VAR_024721" description="In dbSNP:rs28371704." evidence="4">
    <original>H</original>
    <variation>R</variation>
    <location>
        <position position="94"/>
    </location>
</feature>
<feature type="sequence variant" id="VAR_072766" description="In allele CYP2D6*88; dbSNP:rs76187628." evidence="14">
    <original>V</original>
    <variation>A</variation>
    <location>
        <position position="104"/>
    </location>
</feature>
<feature type="sequence variant" id="VAR_008337" description="In allele CYP2D6*17; poor debrisquone metabolism; dbSNP:rs28371706." evidence="4 19">
    <original>T</original>
    <variation>I</variation>
    <location>
        <position position="107"/>
    </location>
</feature>
<feature type="sequence variant" id="VAR_024722" description="In dbSNP:rs1135822." evidence="4">
    <original>F</original>
    <variation>I</variation>
    <location>
        <position position="120"/>
    </location>
</feature>
<feature type="sequence variant" id="VAR_072767" description="In allele CYP2D6*89; &gt;90% decrease of monooxygenase activity towards dextromethorphan and bufuralol; dbSNP:rs375135093." evidence="14">
    <original>L</original>
    <variation>S</variation>
    <location>
        <position position="142"/>
    </location>
</feature>
<feature type="sequence variant" id="VAR_072768" description="In allele CYP2D6*90; dbSNP:rs569229126." evidence="14">
    <original>K</original>
    <variation>R</variation>
    <location>
        <position position="147"/>
    </location>
</feature>
<feature type="sequence variant" id="VAR_024723" description="In allele CYP2D6*45A, allele CYP2D6*45B and allele CYP2D6*46; dbSNP:rs28371710." evidence="4 6">
    <original>E</original>
    <variation>K</variation>
    <location>
        <position position="155"/>
    </location>
</feature>
<feature type="sequence variant" id="VAR_072769" description="In allele CYP2D6*91." evidence="14">
    <original>C</original>
    <variation>S</variation>
    <location>
        <position position="161"/>
    </location>
</feature>
<feature type="sequence variant" id="VAR_072770" description="In dbSNP:rs748617946 and dbSNP:rs2146938189." evidence="14">
    <original>F</original>
    <variation>L</variation>
    <location>
        <position position="164"/>
    </location>
</feature>
<feature type="sequence variant" id="VAR_008338" description="In allele CYP2D6*14; poor debrisquone metabolism; dbSNP:rs5030865." evidence="1">
    <original>G</original>
    <variation>R</variation>
    <location>
        <position position="169"/>
    </location>
</feature>
<feature type="sequence variant" id="VAR_008339" description="In allele CYP2D6*6B and allele CYP2D6*6C; dbSNP:rs5030866." evidence="16">
    <original>G</original>
    <variation>E</variation>
    <location>
        <position position="212"/>
    </location>
</feature>
<feature type="sequence variant" id="VAR_072771" description="&gt;90% decrease of monooxygenase activity towards dextromethorphan and bufuralol; dbSNP:rs567606867." evidence="14">
    <original>E</original>
    <variation>K</variation>
    <location>
        <position position="215"/>
    </location>
</feature>
<feature type="sequence variant" id="VAR_072772" description="In dbSNP:rs371793722." evidence="14">
    <original>F</original>
    <variation>S</variation>
    <location>
        <position position="219"/>
    </location>
</feature>
<feature type="sequence variant" id="VAR_045679" description="In dbSNP:rs17002853.">
    <original>L</original>
    <variation>P</variation>
    <location>
        <position position="231"/>
    </location>
</feature>
<feature type="sequence variant" id="VAR_008370" description="In allele CYP2D6*33; dbSNP:rs28371717." evidence="4">
    <original>A</original>
    <variation>S</variation>
    <location>
        <position position="237"/>
    </location>
</feature>
<feature type="sequence variant" id="VAR_072773" description="In allele CYP2D6*93; &gt;90% decrease of monooxygenase activity towards dextromethorphan and bufuralol." evidence="14">
    <original>T</original>
    <variation>P</variation>
    <location>
        <position position="249"/>
    </location>
</feature>
<feature type="sequence variant" id="VAR_008347" description="In allele CYP2D6*9." evidence="8">
    <location>
        <position position="281"/>
    </location>
</feature>
<feature type="sequence variant" id="VAR_008340" description="In allele CYP2D6*2, allele CYP2D6*12, allele CYP2D6*14, allele CYP2D6*17, allele CYP2D6*45A, allele CYP2D6*45B and allele CYP2D6*46; significantly reduced monooxygenase activity toward anandamide; slight decrease of monooxygenase activity towards bufuralol; dbSNP:rs16947." evidence="2 4 5 6 12 14">
    <original>R</original>
    <variation>C</variation>
    <location>
        <position position="296"/>
    </location>
</feature>
<feature type="sequence variant" id="VAR_008371" description="In allele CYP2D6*24; dbSNP:rs949717872.">
    <original>I</original>
    <variation>L</variation>
    <location>
        <position position="297"/>
    </location>
</feature>
<feature type="sequence variant" id="VAR_045680" description="In dbSNP:rs1058170.">
    <original>A</original>
    <variation>G</variation>
    <location>
        <position position="300"/>
    </location>
</feature>
<feature type="sequence variant" id="VAR_014633" description="In dbSNP:rs1135830.">
    <original>S</original>
    <variation>L</variation>
    <location>
        <position position="311"/>
    </location>
</feature>
<feature type="sequence variant" id="VAR_008348" description="In allele CYP2D6*7; loss of activity; dbSNP:rs5030867." evidence="15">
    <original>H</original>
    <variation>P</variation>
    <location>
        <position position="324"/>
    </location>
</feature>
<feature type="sequence variant" id="VAR_072774" description="In dbSNP:rs2146932631." evidence="14">
    <original>V</original>
    <variation>M</variation>
    <location>
        <position position="327"/>
    </location>
</feature>
<feature type="sequence variant" id="VAR_059150" description="In dbSNP:rs3915951.">
    <original>R</original>
    <variation>L</variation>
    <location>
        <position position="329"/>
    </location>
</feature>
<feature type="sequence variant" id="VAR_072775" description="In dbSNP:rs745746329." evidence="14">
    <original>D</original>
    <variation>N</variation>
    <location>
        <position position="336"/>
    </location>
</feature>
<feature type="sequence variant" id="VAR_072776" description="In allele CYP2D6*94; dbSNP:rs748712690." evidence="14">
    <original>D</original>
    <variation>G</variation>
    <location>
        <position position="337"/>
    </location>
</feature>
<feature type="sequence variant" id="VAR_072777" description="In dbSNP:rs750996195." evidence="14">
    <original>V</original>
    <variation>M</variation>
    <location>
        <position position="342"/>
    </location>
</feature>
<feature type="sequence variant" id="VAR_008372" description="In allele CYP2D6*25; dbSNP:rs267608295.">
    <original>R</original>
    <variation>G</variation>
    <location>
        <position position="343"/>
    </location>
</feature>
<feature type="sequence variant" id="VAR_072778" description="In dbSNP:rs76088846." evidence="14">
    <original>R</original>
    <variation>Q</variation>
    <location>
        <position position="344"/>
    </location>
</feature>
<feature type="sequence variant" id="VAR_045681" description="In dbSNP:rs1058172.">
    <original>R</original>
    <variation>H</variation>
    <location>
        <position position="365"/>
    </location>
</feature>
<feature type="sequence variant" id="VAR_008373" description="In allele CYP2D6*26.">
    <original>I</original>
    <variation>T</variation>
    <location>
        <position position="369"/>
    </location>
</feature>
<feature type="sequence variant" id="VAR_059151" description="In dbSNP:rs61737946.">
    <original>G</original>
    <variation>S</variation>
    <location>
        <position position="373"/>
    </location>
</feature>
<feature type="sequence variant" id="VAR_008374" description="In allele CYP2D6*27; dbSNP:rs769157652.">
    <original>E</original>
    <variation>K</variation>
    <location>
        <position position="410"/>
    </location>
</feature>
<feature type="sequence variant" id="VAR_024724" description="In dbSNP:rs28371733." evidence="4">
    <original>E</original>
    <variation>K</variation>
    <location>
        <position position="418"/>
    </location>
</feature>
<feature type="sequence variant" id="VAR_072779" description="&gt;90% decrease of monooxygenase activity towards dextromethorphan and bufuralol; dbSNP:rs777560972." evidence="14">
    <original>R</original>
    <variation>C</variation>
    <location>
        <position position="440"/>
    </location>
</feature>
<feature type="sequence variant" id="VAR_072780" description="In allele CYP2D6*97." evidence="14">
    <original>F</original>
    <variation>L</variation>
    <location>
        <position position="457"/>
    </location>
</feature>
<feature type="sequence variant" id="VAR_072781" description="In allele CYP2D6*98." evidence="14">
    <original>H</original>
    <variation>D</variation>
    <location>
        <position position="463"/>
    </location>
</feature>
<feature type="sequence variant" id="VAR_024725" description="In dbSNP:rs1135833." evidence="4">
    <original>P</original>
    <variation>A</variation>
    <location>
        <position position="469"/>
    </location>
</feature>
<feature type="sequence variant" id="VAR_024726" description="In dbSNP:rs28371735." evidence="4">
    <original>H</original>
    <variation>Y</variation>
    <location>
        <position position="478"/>
    </location>
</feature>
<feature type="sequence variant" id="VAR_008341" description="In allele CYP2D6*2, allele CYP2D6*10, allele CYP2D6*12, allele CYP2D6*14, allele CYP2D6*17, allele CYP2D6*45A, allele CYP2D6*45B and allele CYP2D6*46; impaired metabolism of sparteine; dbSNP:rs1135840." evidence="2 4 5 6 14 17">
    <original>S</original>
    <variation>T</variation>
    <location>
        <position position="486"/>
    </location>
</feature>
<feature type="sequence variant" id="VAR_072782" description="In dbSNP:rs370580423." evidence="14">
    <original>R</original>
    <variation>C</variation>
    <location>
        <position position="497"/>
    </location>
</feature>
<feature type="sequence conflict" description="In Ref. 1; AAA52153 and 2; CAA30807." evidence="24" ref="1 2">
    <original>V</original>
    <variation>M</variation>
    <location>
        <position position="374"/>
    </location>
</feature>
<feature type="turn" evidence="32">
    <location>
        <begin position="41"/>
        <end position="43"/>
    </location>
</feature>
<feature type="helix" evidence="32">
    <location>
        <begin position="46"/>
        <end position="48"/>
    </location>
</feature>
<feature type="strand" evidence="36">
    <location>
        <begin position="51"/>
        <end position="53"/>
    </location>
</feature>
<feature type="helix" evidence="32">
    <location>
        <begin position="54"/>
        <end position="65"/>
    </location>
</feature>
<feature type="strand" evidence="32">
    <location>
        <begin position="67"/>
        <end position="73"/>
    </location>
</feature>
<feature type="strand" evidence="32">
    <location>
        <begin position="76"/>
        <end position="81"/>
    </location>
</feature>
<feature type="helix" evidence="32">
    <location>
        <begin position="83"/>
        <end position="91"/>
    </location>
</feature>
<feature type="turn" evidence="32">
    <location>
        <begin position="92"/>
        <end position="94"/>
    </location>
</feature>
<feature type="helix" evidence="32">
    <location>
        <begin position="95"/>
        <end position="97"/>
    </location>
</feature>
<feature type="helix" evidence="32">
    <location>
        <begin position="105"/>
        <end position="110"/>
    </location>
</feature>
<feature type="strand" evidence="33">
    <location>
        <begin position="119"/>
        <end position="121"/>
    </location>
</feature>
<feature type="helix" evidence="32">
    <location>
        <begin position="126"/>
        <end position="141"/>
    </location>
</feature>
<feature type="strand" evidence="33">
    <location>
        <begin position="145"/>
        <end position="147"/>
    </location>
</feature>
<feature type="helix" evidence="32">
    <location>
        <begin position="148"/>
        <end position="165"/>
    </location>
</feature>
<feature type="turn" evidence="32">
    <location>
        <begin position="166"/>
        <end position="169"/>
    </location>
</feature>
<feature type="helix" evidence="32">
    <location>
        <begin position="175"/>
        <end position="191"/>
    </location>
</feature>
<feature type="helix" evidence="32">
    <location>
        <begin position="200"/>
        <end position="214"/>
    </location>
</feature>
<feature type="helix" evidence="32">
    <location>
        <begin position="219"/>
        <end position="226"/>
    </location>
</feature>
<feature type="helix" evidence="32">
    <location>
        <begin position="228"/>
        <end position="232"/>
    </location>
</feature>
<feature type="helix" evidence="32">
    <location>
        <begin position="234"/>
        <end position="240"/>
    </location>
</feature>
<feature type="helix" evidence="32">
    <location>
        <begin position="242"/>
        <end position="261"/>
    </location>
</feature>
<feature type="helix" evidence="32">
    <location>
        <begin position="271"/>
        <end position="281"/>
    </location>
</feature>
<feature type="turn" evidence="32">
    <location>
        <begin position="282"/>
        <end position="284"/>
    </location>
</feature>
<feature type="helix" evidence="32">
    <location>
        <begin position="292"/>
        <end position="323"/>
    </location>
</feature>
<feature type="helix" evidence="32">
    <location>
        <begin position="325"/>
        <end position="338"/>
    </location>
</feature>
<feature type="strand" evidence="32">
    <location>
        <begin position="341"/>
        <end position="343"/>
    </location>
</feature>
<feature type="helix" evidence="32">
    <location>
        <begin position="347"/>
        <end position="350"/>
    </location>
</feature>
<feature type="helix" evidence="32">
    <location>
        <begin position="354"/>
        <end position="367"/>
    </location>
</feature>
<feature type="strand" evidence="31">
    <location>
        <begin position="370"/>
        <end position="372"/>
    </location>
</feature>
<feature type="strand" evidence="32">
    <location>
        <begin position="382"/>
        <end position="384"/>
    </location>
</feature>
<feature type="strand" evidence="32">
    <location>
        <begin position="387"/>
        <end position="389"/>
    </location>
</feature>
<feature type="strand" evidence="32">
    <location>
        <begin position="394"/>
        <end position="397"/>
    </location>
</feature>
<feature type="helix" evidence="32">
    <location>
        <begin position="399"/>
        <end position="403"/>
    </location>
</feature>
<feature type="turn" evidence="32">
    <location>
        <begin position="406"/>
        <end position="408"/>
    </location>
</feature>
<feature type="strand" evidence="32">
    <location>
        <begin position="409"/>
        <end position="411"/>
    </location>
</feature>
<feature type="helix" evidence="32">
    <location>
        <begin position="417"/>
        <end position="420"/>
    </location>
</feature>
<feature type="helix" evidence="34">
    <location>
        <begin position="439"/>
        <end position="441"/>
    </location>
</feature>
<feature type="helix" evidence="32">
    <location>
        <begin position="446"/>
        <end position="463"/>
    </location>
</feature>
<feature type="strand" evidence="32">
    <location>
        <begin position="464"/>
        <end position="467"/>
    </location>
</feature>
<feature type="strand" evidence="35">
    <location>
        <begin position="470"/>
        <end position="472"/>
    </location>
</feature>
<feature type="strand" evidence="32">
    <location>
        <begin position="479"/>
        <end position="487"/>
    </location>
</feature>
<feature type="strand" evidence="32">
    <location>
        <begin position="492"/>
        <end position="496"/>
    </location>
</feature>
<reference key="1">
    <citation type="journal article" date="1988" name="Genomics">
        <title>Human debrisoquine 4-hydroxylase (P450IID1): cDNA and deduced amino acid sequence and assignment of the CYP2D locus to chromosome 22.</title>
        <authorList>
            <person name="Gonzalez F.J."/>
            <person name="Vilbois F."/>
            <person name="Hardwick J.P."/>
            <person name="McBride O.W."/>
            <person name="Nebert D.W."/>
            <person name="Gelboin H.V."/>
            <person name="Meyer U.A."/>
        </authorList>
    </citation>
    <scope>NUCLEOTIDE SEQUENCE [MRNA] (ISOFORM 1)</scope>
</reference>
<reference key="2">
    <citation type="journal article" date="1988" name="Nature">
        <title>Characterization of the common genetic defect in humans deficient in debrisoquine metabolism.</title>
        <authorList>
            <person name="Gonzalez F.J."/>
            <person name="Skoda R.C."/>
            <person name="Kimura S."/>
            <person name="Umeno M."/>
            <person name="Zanger U.M."/>
            <person name="Nebert D.W."/>
            <person name="Gelboin H.V."/>
            <person name="Hardwick J.P."/>
            <person name="Meyer U.A."/>
        </authorList>
    </citation>
    <scope>NUCLEOTIDE SEQUENCE [MRNA] (ISOFORM 1)</scope>
    <source>
        <tissue>Liver</tissue>
    </source>
</reference>
<reference key="3">
    <citation type="journal article" date="1989" name="Am. J. Hum. Genet.">
        <title>The human debrisoquine 4-hydroxylase (CYP2D) locus: sequence and identification of the polymorphic CYP2D6 gene, a related gene, and a pseudogene.</title>
        <authorList>
            <person name="Kimura S."/>
            <person name="Umeno M."/>
            <person name="Skoda R.C."/>
            <person name="Meyer U.A."/>
            <person name="Gonzalez F.J."/>
        </authorList>
    </citation>
    <scope>NUCLEOTIDE SEQUENCE [GENOMIC DNA]</scope>
</reference>
<reference key="4">
    <citation type="journal article" date="2005" name="Pharmacogenomics J.">
        <title>Identification and characterization of novel sequence variations in the cytochrome P4502D6 (CYP2D6) gene in African Americans.</title>
        <authorList>
            <person name="Gaedigk A."/>
            <person name="Bhathena A."/>
            <person name="Ndjountche L."/>
            <person name="Pearce R.E."/>
            <person name="Abdel-Rahman S.M."/>
            <person name="Alander S.W."/>
            <person name="Bradford L.D."/>
            <person name="Rogan P.K."/>
            <person name="Leeder J.S."/>
        </authorList>
    </citation>
    <scope>NUCLEOTIDE SEQUENCE [GENOMIC DNA] (ALLELE CYP2D6*1)</scope>
    <scope>IDENTIFICATION OF ALLELES CYP2D6*41B; CYP2D6*45A; CYP2D6*45B AND CYP2D6*46</scope>
    <scope>VARIANTS HIS-26; LYS-155; CYS-296 AND THR-486</scope>
    <scope>CHARACTERIZATION OF ISOZYMES CYP2D6.45 AND CYP2D6.46</scope>
</reference>
<reference key="5">
    <citation type="journal article" date="2005" name="Pharmacogenomics J.">
        <authorList>
            <person name="Gaedigk A."/>
            <person name="Bhathena A."/>
            <person name="Ndjountche L."/>
            <person name="Pearce R.E."/>
            <person name="Abdel-Rahman S.M."/>
            <person name="Alander S.W."/>
            <person name="Bradford L.D."/>
            <person name="Rogan P.K."/>
            <person name="Leeder J.S."/>
        </authorList>
    </citation>
    <scope>ERRATUM OF PUBMED:15768052</scope>
</reference>
<reference key="6">
    <citation type="submission" date="2005-11" db="EMBL/GenBank/DDBJ databases">
        <title>CYP2D6 evolution and allele diversity among human races.</title>
        <authorList>
            <person name="Koch W.H."/>
            <person name="Nikoloff D.M."/>
            <person name="Lu W."/>
            <person name="Pan R.M."/>
            <person name="deLeon J."/>
            <person name="Wedlund P.J."/>
        </authorList>
    </citation>
    <scope>NUCLEOTIDE SEQUENCE [GENOMIC DNA]</scope>
    <scope>VARIANT HIS-26</scope>
</reference>
<reference key="7">
    <citation type="journal article" date="1999" name="Nature">
        <title>The DNA sequence of human chromosome 22.</title>
        <authorList>
            <person name="Dunham I."/>
            <person name="Hunt A.R."/>
            <person name="Collins J.E."/>
            <person name="Bruskiewich R."/>
            <person name="Beare D.M."/>
            <person name="Clamp M."/>
            <person name="Smink L.J."/>
            <person name="Ainscough R."/>
            <person name="Almeida J.P."/>
            <person name="Babbage A.K."/>
            <person name="Bagguley C."/>
            <person name="Bailey J."/>
            <person name="Barlow K.F."/>
            <person name="Bates K.N."/>
            <person name="Beasley O.P."/>
            <person name="Bird C.P."/>
            <person name="Blakey S.E."/>
            <person name="Bridgeman A.M."/>
            <person name="Buck D."/>
            <person name="Burgess J."/>
            <person name="Burrill W.D."/>
            <person name="Burton J."/>
            <person name="Carder C."/>
            <person name="Carter N.P."/>
            <person name="Chen Y."/>
            <person name="Clark G."/>
            <person name="Clegg S.M."/>
            <person name="Cobley V.E."/>
            <person name="Cole C.G."/>
            <person name="Collier R.E."/>
            <person name="Connor R."/>
            <person name="Conroy D."/>
            <person name="Corby N.R."/>
            <person name="Coville G.J."/>
            <person name="Cox A.V."/>
            <person name="Davis J."/>
            <person name="Dawson E."/>
            <person name="Dhami P.D."/>
            <person name="Dockree C."/>
            <person name="Dodsworth S.J."/>
            <person name="Durbin R.M."/>
            <person name="Ellington A.G."/>
            <person name="Evans K.L."/>
            <person name="Fey J.M."/>
            <person name="Fleming K."/>
            <person name="French L."/>
            <person name="Garner A.A."/>
            <person name="Gilbert J.G.R."/>
            <person name="Goward M.E."/>
            <person name="Grafham D.V."/>
            <person name="Griffiths M.N.D."/>
            <person name="Hall C."/>
            <person name="Hall R.E."/>
            <person name="Hall-Tamlyn G."/>
            <person name="Heathcott R.W."/>
            <person name="Ho S."/>
            <person name="Holmes S."/>
            <person name="Hunt S.E."/>
            <person name="Jones M.C."/>
            <person name="Kershaw J."/>
            <person name="Kimberley A.M."/>
            <person name="King A."/>
            <person name="Laird G.K."/>
            <person name="Langford C.F."/>
            <person name="Leversha M.A."/>
            <person name="Lloyd C."/>
            <person name="Lloyd D.M."/>
            <person name="Martyn I.D."/>
            <person name="Mashreghi-Mohammadi M."/>
            <person name="Matthews L.H."/>
            <person name="Mccann O.T."/>
            <person name="Mcclay J."/>
            <person name="Mclaren S."/>
            <person name="McMurray A.A."/>
            <person name="Milne S.A."/>
            <person name="Mortimore B.J."/>
            <person name="Odell C.N."/>
            <person name="Pavitt R."/>
            <person name="Pearce A.V."/>
            <person name="Pearson D."/>
            <person name="Phillimore B.J.C.T."/>
            <person name="Phillips S.H."/>
            <person name="Plumb R.W."/>
            <person name="Ramsay H."/>
            <person name="Ramsey Y."/>
            <person name="Rogers L."/>
            <person name="Ross M.T."/>
            <person name="Scott C.E."/>
            <person name="Sehra H.K."/>
            <person name="Skuce C.D."/>
            <person name="Smalley S."/>
            <person name="Smith M.L."/>
            <person name="Soderlund C."/>
            <person name="Spragon L."/>
            <person name="Steward C.A."/>
            <person name="Sulston J.E."/>
            <person name="Swann R.M."/>
            <person name="Vaudin M."/>
            <person name="Wall M."/>
            <person name="Wallis J.M."/>
            <person name="Whiteley M.N."/>
            <person name="Willey D.L."/>
            <person name="Williams L."/>
            <person name="Williams S.A."/>
            <person name="Williamson H."/>
            <person name="Wilmer T.E."/>
            <person name="Wilming L."/>
            <person name="Wright C.L."/>
            <person name="Hubbard T."/>
            <person name="Bentley D.R."/>
            <person name="Beck S."/>
            <person name="Rogers J."/>
            <person name="Shimizu N."/>
            <person name="Minoshima S."/>
            <person name="Kawasaki K."/>
            <person name="Sasaki T."/>
            <person name="Asakawa S."/>
            <person name="Kudoh J."/>
            <person name="Shintani A."/>
            <person name="Shibuya K."/>
            <person name="Yoshizaki Y."/>
            <person name="Aoki N."/>
            <person name="Mitsuyama S."/>
            <person name="Roe B.A."/>
            <person name="Chen F."/>
            <person name="Chu L."/>
            <person name="Crabtree J."/>
            <person name="Deschamps S."/>
            <person name="Do A."/>
            <person name="Do T."/>
            <person name="Dorman A."/>
            <person name="Fang F."/>
            <person name="Fu Y."/>
            <person name="Hu P."/>
            <person name="Hua A."/>
            <person name="Kenton S."/>
            <person name="Lai H."/>
            <person name="Lao H.I."/>
            <person name="Lewis J."/>
            <person name="Lewis S."/>
            <person name="Lin S.-P."/>
            <person name="Loh P."/>
            <person name="Malaj E."/>
            <person name="Nguyen T."/>
            <person name="Pan H."/>
            <person name="Phan S."/>
            <person name="Qi S."/>
            <person name="Qian Y."/>
            <person name="Ray L."/>
            <person name="Ren Q."/>
            <person name="Shaull S."/>
            <person name="Sloan D."/>
            <person name="Song L."/>
            <person name="Wang Q."/>
            <person name="Wang Y."/>
            <person name="Wang Z."/>
            <person name="White J."/>
            <person name="Willingham D."/>
            <person name="Wu H."/>
            <person name="Yao Z."/>
            <person name="Zhan M."/>
            <person name="Zhang G."/>
            <person name="Chissoe S."/>
            <person name="Murray J."/>
            <person name="Miller N."/>
            <person name="Minx P."/>
            <person name="Fulton R."/>
            <person name="Johnson D."/>
            <person name="Bemis G."/>
            <person name="Bentley D."/>
            <person name="Bradshaw H."/>
            <person name="Bourne S."/>
            <person name="Cordes M."/>
            <person name="Du Z."/>
            <person name="Fulton L."/>
            <person name="Goela D."/>
            <person name="Graves T."/>
            <person name="Hawkins J."/>
            <person name="Hinds K."/>
            <person name="Kemp K."/>
            <person name="Latreille P."/>
            <person name="Layman D."/>
            <person name="Ozersky P."/>
            <person name="Rohlfing T."/>
            <person name="Scheet P."/>
            <person name="Walker C."/>
            <person name="Wamsley A."/>
            <person name="Wohldmann P."/>
            <person name="Pepin K."/>
            <person name="Nelson J."/>
            <person name="Korf I."/>
            <person name="Bedell J.A."/>
            <person name="Hillier L.W."/>
            <person name="Mardis E."/>
            <person name="Waterston R."/>
            <person name="Wilson R."/>
            <person name="Emanuel B.S."/>
            <person name="Shaikh T."/>
            <person name="Kurahashi H."/>
            <person name="Saitta S."/>
            <person name="Budarf M.L."/>
            <person name="McDermid H.E."/>
            <person name="Johnson A."/>
            <person name="Wong A.C.C."/>
            <person name="Morrow B.E."/>
            <person name="Edelmann L."/>
            <person name="Kim U.J."/>
            <person name="Shizuya H."/>
            <person name="Simon M.I."/>
            <person name="Dumanski J.P."/>
            <person name="Peyrard M."/>
            <person name="Kedra D."/>
            <person name="Seroussi E."/>
            <person name="Fransson I."/>
            <person name="Tapia I."/>
            <person name="Bruder C.E."/>
            <person name="O'Brien K.P."/>
            <person name="Wilkinson P."/>
            <person name="Bodenteich A."/>
            <person name="Hartman K."/>
            <person name="Hu X."/>
            <person name="Khan A.S."/>
            <person name="Lane L."/>
            <person name="Tilahun Y."/>
            <person name="Wright H."/>
        </authorList>
    </citation>
    <scope>NUCLEOTIDE SEQUENCE [LARGE SCALE GENOMIC DNA]</scope>
    <scope>VARIANTS CYS-296 AND THR-486</scope>
</reference>
<reference key="8">
    <citation type="journal article" date="2004" name="Genome Res.">
        <title>The status, quality, and expansion of the NIH full-length cDNA project: the Mammalian Gene Collection (MGC).</title>
        <authorList>
            <consortium name="The MGC Project Team"/>
        </authorList>
    </citation>
    <scope>NUCLEOTIDE SEQUENCE [LARGE SCALE MRNA] (ISOFORMS 1 AND 2)</scope>
    <scope>VARIANTS CYS-296 AND THR-486</scope>
</reference>
<reference key="9">
    <citation type="journal article" date="2000" name="Drug Metab. Dispos.">
        <title>Biosynthesis of all-trans-retinoic acid from all-trans-retinol: catalysis of all-trans-retinol oxidation by human P-450 cytochromes.</title>
        <authorList>
            <person name="Chen H."/>
            <person name="Howald W.N."/>
            <person name="Juchau M.R."/>
        </authorList>
    </citation>
    <scope>FUNCTION</scope>
    <scope>CATALYTIC ACTIVITY</scope>
    <scope>BIOPHYSICOCHEMICAL PROPERTIES</scope>
    <scope>PATHWAY</scope>
</reference>
<reference key="10">
    <citation type="journal article" date="2008" name="J. Pharmacol. Exp. Ther.">
        <title>The endocannabinoid anandamide is a substrate for the human polymorphic cytochrome P450 2D6.</title>
        <authorList>
            <person name="Snider N.T."/>
            <person name="Sikora M.J."/>
            <person name="Sridar C."/>
            <person name="Feuerstein T.J."/>
            <person name="Rae J.M."/>
            <person name="Hollenberg P.F."/>
        </authorList>
    </citation>
    <scope>FUNCTION</scope>
    <scope>CATALYTIC ACTIVITY</scope>
    <scope>BIOPHYSICOCHEMICAL PROPERTIES</scope>
</reference>
<reference key="11">
    <citation type="journal article" date="2010" name="J. Lipid Res.">
        <title>Stereoselective epoxidation of the last double bond of polyunsaturated fatty acids by human cytochromes P450.</title>
        <authorList>
            <person name="Lucas D."/>
            <person name="Goulitquer S."/>
            <person name="Marienhagen J."/>
            <person name="Fer M."/>
            <person name="Dreano Y."/>
            <person name="Schwaneberg U."/>
            <person name="Amet Y."/>
            <person name="Corcos L."/>
        </authorList>
    </citation>
    <scope>FUNCTION</scope>
    <scope>CATALYTIC ACTIVITY</scope>
    <scope>PATHWAY</scope>
</reference>
<reference key="12">
    <citation type="journal article" date="2010" name="Rapid Commun. Mass Spectrom.">
        <title>Analysis of epoxyeicosatrienoic acids by chiral liquid chromatography/electron capture atmospheric pressure chemical ionization mass spectrometry using [13C]-analog internal standards.</title>
        <authorList>
            <person name="Mesaros C."/>
            <person name="Lee S.H."/>
            <person name="Blair I.A."/>
        </authorList>
    </citation>
    <scope>FUNCTION</scope>
    <scope>CATALYTIC ACTIVITY</scope>
    <scope>PATHWAY</scope>
</reference>
<reference key="13">
    <citation type="journal article" date="2011" name="Drug Metab. Dispos.">
        <title>Anandamide oxidation by wild-type and polymorphically expressed CYP2B6 and CYP2D6.</title>
        <authorList>
            <person name="Sridar C."/>
            <person name="Snider N.T."/>
            <person name="Hollenberg P.F."/>
        </authorList>
    </citation>
    <scope>FUNCTION</scope>
    <scope>CATALYTIC ACTIVITY</scope>
    <scope>CHARACTERIZATION OF VARIANT CYS-296</scope>
</reference>
<reference key="14">
    <citation type="journal article" date="2011" name="J. Lipid Res.">
        <title>Cholesterol 25-hydroxylation activity of CYP3A.</title>
        <authorList>
            <person name="Honda A."/>
            <person name="Miyazaki T."/>
            <person name="Ikegami T."/>
            <person name="Iwamoto J."/>
            <person name="Maeda T."/>
            <person name="Hirayama T."/>
            <person name="Saito Y."/>
            <person name="Teramoto T."/>
            <person name="Matsuzaki Y."/>
        </authorList>
    </citation>
    <scope>FUNCTION</scope>
    <scope>CATALYTIC ACTIVITY</scope>
    <scope>SUBCELLULAR LOCATION</scope>
    <scope>PATHWAY</scope>
</reference>
<reference key="15">
    <citation type="journal article" date="2014" name="J. Proteomics">
        <title>An enzyme assisted RP-RPLC approach for in-depth analysis of human liver phosphoproteome.</title>
        <authorList>
            <person name="Bian Y."/>
            <person name="Song C."/>
            <person name="Cheng K."/>
            <person name="Dong M."/>
            <person name="Wang F."/>
            <person name="Huang J."/>
            <person name="Sun D."/>
            <person name="Wang L."/>
            <person name="Ye M."/>
            <person name="Zou H."/>
        </authorList>
    </citation>
    <scope>IDENTIFICATION BY MASS SPECTROMETRY [LARGE SCALE ANALYSIS]</scope>
    <source>
        <tissue>Liver</tissue>
    </source>
</reference>
<reference key="16">
    <citation type="journal article" date="2006" name="J. Biol. Chem.">
        <title>Crystal structure of human cytochrome P450 2D6.</title>
        <authorList>
            <person name="Rowland P."/>
            <person name="Blaney F.E."/>
            <person name="Smyth M.G."/>
            <person name="Jones J.J."/>
            <person name="Leydon V.R."/>
            <person name="Oxbrow A.K."/>
            <person name="Lewis C.J."/>
            <person name="Tennant M.G."/>
            <person name="Modi S."/>
            <person name="Eggleston D.S."/>
            <person name="Chenery R.J."/>
            <person name="Bridges A.M."/>
        </authorList>
    </citation>
    <scope>X-RAY CRYSTALLOGRAPHY (3.0 ANGSTROMS) OF 34-497 IN COMPLEX WITH HEME</scope>
    <scope>FUNCTION</scope>
</reference>
<reference key="17">
    <citation type="journal article" date="1991" name="Pharmacogenetics">
        <title>Identification of a new variant CYP2D6 allele lacking the codon encoding Lys-281: possible association with the poor metabolizer phenotype.</title>
        <authorList>
            <person name="Tyndale R."/>
            <person name="Aoyama T."/>
            <person name="Broly F."/>
            <person name="Matsunaga T."/>
            <person name="Inaba T."/>
            <person name="Kalow W."/>
            <person name="Gelboin H.V."/>
            <person name="Meyer U.A."/>
            <person name="Gonzalez F.J."/>
        </authorList>
    </citation>
    <scope>VARIANT LYS-281 DEL</scope>
</reference>
<reference key="18">
    <citation type="journal article" date="1993" name="Pharmacogenetics">
        <title>Evidence for a new variant CYP2D6 allele CYP2D6J in a Japanese population associated with lower in vivo rates of sparteine metabolism.</title>
        <authorList>
            <person name="Yokota H."/>
            <person name="Tamura S."/>
            <person name="Furuya H."/>
            <person name="Kimura S."/>
            <person name="Watanabe M."/>
            <person name="Kanazawa I."/>
            <person name="Kondo I."/>
            <person name="Gonzalez F.J."/>
        </authorList>
    </citation>
    <scope>VARIANTS SER-34 AND THR-486</scope>
</reference>
<reference key="19">
    <citation type="journal article" date="1994" name="Naunyn Schmiedebergs Arch. Pharmacol.">
        <title>A missense mutation in exon 6 of the CYP2D6 gene leading to a histidine 324 to proline exchange is associated with the poor metabolizer phenotype of sparteine.</title>
        <authorList>
            <person name="Evert B."/>
            <person name="Griese E.U."/>
            <person name="Eichelbaum M."/>
        </authorList>
    </citation>
    <scope>VARIANT PRO-324</scope>
</reference>
<reference key="20">
    <citation type="journal article" date="1995" name="Hum. Genet.">
        <title>An inactive cytochrome P450 CYP2D6 allele containing a deletion and a base substitution.</title>
        <authorList>
            <person name="Daly A.K."/>
            <person name="Leathart J.B."/>
            <person name="London S.J."/>
            <person name="Idle J.R."/>
        </authorList>
    </citation>
    <scope>VARIANT GLU-212</scope>
</reference>
<reference key="21">
    <citation type="journal article" date="1996" name="Br. J. Clin. Pharmacol.">
        <title>A novel mutant variant of the CYP2D6 gene (CYP2D6*17) common in a black African population: association with diminished debrisoquine hydroxylase activity.</title>
        <authorList>
            <person name="Masimirembwa C."/>
            <person name="Persson I."/>
            <person name="Bertilsson L."/>
            <person name="Hasler J."/>
            <person name="Ingelman-Sundberg M."/>
        </authorList>
    </citation>
    <scope>VARIANT ILE-107</scope>
</reference>
<reference key="22">
    <citation type="journal article" date="1996" name="Hum. Genet.">
        <title>An additional allelic variant of the CYP2D6 gene causing impaired metabolism of sparteine.</title>
        <authorList>
            <person name="Marez D."/>
            <person name="Legrand M."/>
            <person name="Sabbagh N."/>
            <person name="Lo-Guidice J.-M."/>
            <person name="Boone P."/>
            <person name="Broly F."/>
        </authorList>
    </citation>
    <scope>VARIANT ARG-42</scope>
</reference>
<reference key="23">
    <citation type="journal article" date="1997" name="Pharmacogenetics">
        <title>Polymorphism of the cytochrome P450 CYP2D6 gene in a European population: characterization of 48 mutations and 53 alleles, their frequencies and evolution.</title>
        <authorList>
            <person name="Marez D."/>
            <person name="Legrand M."/>
            <person name="Sabbagh N."/>
            <person name="Guidice J.M."/>
            <person name="Spire C."/>
            <person name="Lafitte J.J."/>
            <person name="Meyer U.A."/>
            <person name="Broly F."/>
        </authorList>
    </citation>
    <scope>VARIANTS</scope>
</reference>
<reference key="24">
    <citation type="journal article" date="1999" name="Drug Metab. Dispos.">
        <title>G169R mutation diminishes the metabolic activity of CYP2D6 in Chinese.</title>
        <authorList>
            <person name="Wang S.L."/>
            <person name="Lai M.D."/>
            <person name="Huang J.D."/>
        </authorList>
    </citation>
    <scope>VARIANT ARG-169</scope>
</reference>
<reference key="25">
    <citation type="journal article" date="2004" name="Pharmacogenomics">
        <title>Genetic variation in eleven phase I drug metabolism genes in an ethnically diverse population.</title>
        <authorList>
            <person name="Solus J.F."/>
            <person name="Arietta B.J."/>
            <person name="Harris J.R."/>
            <person name="Sexton D.P."/>
            <person name="Steward J.Q."/>
            <person name="McMunn C."/>
            <person name="Ihrie P."/>
            <person name="Mehall J.M."/>
            <person name="Edwards T.L."/>
            <person name="Dawson E.P."/>
        </authorList>
    </citation>
    <scope>VARIANTS MET-11; HIS-26; SER-34; MET-91; ARG-94; ILE-107; ILE-120; LYS-155; SER-237; CYS-296; LYS-418; ALA-469; TYR-478 AND THR-486</scope>
</reference>
<reference key="26">
    <citation type="journal article" date="2015" name="Basic Clin. Pharmacol. Toxicol.">
        <title>In vitro functional assessment of 22 newly identified CYP2D6 allelic variants in the Chinese population.</title>
        <authorList>
            <person name="Dai D.P."/>
            <person name="Geng P.W."/>
            <person name="Wang S.H."/>
            <person name="Cai J."/>
            <person name="Hu L.M."/>
            <person name="Nie J.J."/>
            <person name="Hu J.H."/>
            <person name="Hu G.X."/>
            <person name="Cai J.P."/>
        </authorList>
    </citation>
    <scope>VARIANTS VAL-5; GLN-25; SER-34; ALA-104; SER-142; ARG-147; SER-161; LEU-164; LYS-215; SER-219; PRO-249; CYS-296; MET-327; ASN-336; GLY-337; MET-342; GLN-344; CYS-440; LEU-457; ASP-463; THR-486 AND CYS-497</scope>
</reference>
<accession>P10635</accession>
<accession>Q16752</accession>
<accession>Q2XND6</accession>
<accession>Q2XND7</accession>
<accession>Q2XNE0</accession>
<accession>Q6B012</accession>
<accession>Q6NXU8</accession>
<dbReference type="EC" id="1.14.14.-" evidence="9 12"/>
<dbReference type="EMBL" id="M20403">
    <property type="protein sequence ID" value="AAA52153.1"/>
    <property type="molecule type" value="mRNA"/>
</dbReference>
<dbReference type="EMBL" id="X08006">
    <property type="protein sequence ID" value="CAA30807.1"/>
    <property type="molecule type" value="mRNA"/>
</dbReference>
<dbReference type="EMBL" id="M33388">
    <property type="protein sequence ID" value="AAA53500.1"/>
    <property type="molecule type" value="Genomic_DNA"/>
</dbReference>
<dbReference type="EMBL" id="AY545216">
    <property type="protein sequence ID" value="AAS55001.1"/>
    <property type="molecule type" value="Genomic_DNA"/>
</dbReference>
<dbReference type="EMBL" id="DQ282144">
    <property type="protein sequence ID" value="ABB77895.1"/>
    <property type="molecule type" value="Genomic_DNA"/>
</dbReference>
<dbReference type="EMBL" id="DQ282145">
    <property type="protein sequence ID" value="ABB77896.1"/>
    <property type="molecule type" value="Genomic_DNA"/>
</dbReference>
<dbReference type="EMBL" id="DQ282146">
    <property type="protein sequence ID" value="ABB77897.1"/>
    <property type="molecule type" value="Genomic_DNA"/>
</dbReference>
<dbReference type="EMBL" id="DQ282151">
    <property type="protein sequence ID" value="ABB77899.1"/>
    <property type="molecule type" value="Genomic_DNA"/>
</dbReference>
<dbReference type="EMBL" id="DQ282154">
    <property type="protein sequence ID" value="ABB77902.1"/>
    <property type="molecule type" value="Genomic_DNA"/>
</dbReference>
<dbReference type="EMBL" id="DQ282155">
    <property type="protein sequence ID" value="ABB77903.1"/>
    <property type="molecule type" value="Genomic_DNA"/>
</dbReference>
<dbReference type="EMBL" id="BX247885">
    <property type="status" value="NOT_ANNOTATED_CDS"/>
    <property type="molecule type" value="Genomic_DNA"/>
</dbReference>
<dbReference type="EMBL" id="BC066877">
    <property type="protein sequence ID" value="AAH66877.1"/>
    <property type="molecule type" value="mRNA"/>
</dbReference>
<dbReference type="EMBL" id="BC075023">
    <property type="protein sequence ID" value="AAH75023.1"/>
    <property type="molecule type" value="mRNA"/>
</dbReference>
<dbReference type="EMBL" id="BC075024">
    <property type="protein sequence ID" value="AAH75024.1"/>
    <property type="molecule type" value="mRNA"/>
</dbReference>
<dbReference type="CCDS" id="CCDS33657.1">
    <molecule id="P10635-2"/>
</dbReference>
<dbReference type="CCDS" id="CCDS46721.1">
    <molecule id="P10635-1"/>
</dbReference>
<dbReference type="PIR" id="S01199">
    <property type="entry name" value="O4HUD1"/>
</dbReference>
<dbReference type="RefSeq" id="NP_000097.3">
    <molecule id="P10635-1"/>
    <property type="nucleotide sequence ID" value="NM_000106.5"/>
</dbReference>
<dbReference type="RefSeq" id="NP_001020332.2">
    <molecule id="P10635-2"/>
    <property type="nucleotide sequence ID" value="NM_001025161.3"/>
</dbReference>
<dbReference type="PDB" id="2F9Q">
    <property type="method" value="X-ray"/>
    <property type="resolution" value="3.00 A"/>
    <property type="chains" value="A/B/C/D=34-497"/>
</dbReference>
<dbReference type="PDB" id="3QM4">
    <property type="method" value="X-ray"/>
    <property type="resolution" value="2.85 A"/>
    <property type="chains" value="A/B=34-497"/>
</dbReference>
<dbReference type="PDB" id="3TBG">
    <property type="method" value="X-ray"/>
    <property type="resolution" value="2.10 A"/>
    <property type="chains" value="A/B/C/D=34-497"/>
</dbReference>
<dbReference type="PDB" id="3TDA">
    <property type="method" value="X-ray"/>
    <property type="resolution" value="2.67 A"/>
    <property type="chains" value="A/B/C/D=34-497"/>
</dbReference>
<dbReference type="PDB" id="4WNT">
    <property type="method" value="X-ray"/>
    <property type="resolution" value="2.60 A"/>
    <property type="chains" value="A/B=34-497"/>
</dbReference>
<dbReference type="PDB" id="4WNU">
    <property type="method" value="X-ray"/>
    <property type="resolution" value="2.26 A"/>
    <property type="chains" value="A/B/C/D=34-497"/>
</dbReference>
<dbReference type="PDB" id="4WNV">
    <property type="method" value="X-ray"/>
    <property type="resolution" value="2.35 A"/>
    <property type="chains" value="A/B/C/D=48-497"/>
</dbReference>
<dbReference type="PDB" id="4WNW">
    <property type="method" value="X-ray"/>
    <property type="resolution" value="3.30 A"/>
    <property type="chains" value="A/B=34-497"/>
</dbReference>
<dbReference type="PDB" id="4XRY">
    <property type="method" value="X-ray"/>
    <property type="resolution" value="2.50 A"/>
    <property type="chains" value="A/B/C/D=34-497"/>
</dbReference>
<dbReference type="PDB" id="4XRZ">
    <property type="method" value="X-ray"/>
    <property type="resolution" value="2.40 A"/>
    <property type="chains" value="A/B/C/D=34-497"/>
</dbReference>
<dbReference type="PDB" id="5TFT">
    <property type="method" value="X-ray"/>
    <property type="resolution" value="2.71 A"/>
    <property type="chains" value="A/B/C/D=34-497"/>
</dbReference>
<dbReference type="PDB" id="5TFU">
    <property type="method" value="X-ray"/>
    <property type="resolution" value="2.75 A"/>
    <property type="chains" value="A/B/C/D=34-497"/>
</dbReference>
<dbReference type="PDB" id="6CSB">
    <property type="method" value="X-ray"/>
    <property type="resolution" value="2.39 A"/>
    <property type="chains" value="A/B/C/D=34-497"/>
</dbReference>
<dbReference type="PDB" id="6CSD">
    <property type="method" value="X-ray"/>
    <property type="resolution" value="2.39 A"/>
    <property type="chains" value="A/B=34-497"/>
</dbReference>
<dbReference type="PDBsum" id="2F9Q"/>
<dbReference type="PDBsum" id="3QM4"/>
<dbReference type="PDBsum" id="3TBG"/>
<dbReference type="PDBsum" id="3TDA"/>
<dbReference type="PDBsum" id="4WNT"/>
<dbReference type="PDBsum" id="4WNU"/>
<dbReference type="PDBsum" id="4WNV"/>
<dbReference type="PDBsum" id="4WNW"/>
<dbReference type="PDBsum" id="4XRY"/>
<dbReference type="PDBsum" id="4XRZ"/>
<dbReference type="PDBsum" id="5TFT"/>
<dbReference type="PDBsum" id="5TFU"/>
<dbReference type="PDBsum" id="6CSB"/>
<dbReference type="PDBsum" id="6CSD"/>
<dbReference type="BMRB" id="P10635"/>
<dbReference type="SMR" id="P10635"/>
<dbReference type="BioGRID" id="107940">
    <property type="interactions" value="32"/>
</dbReference>
<dbReference type="CORUM" id="P10635"/>
<dbReference type="FunCoup" id="P10635">
    <property type="interactions" value="433"/>
</dbReference>
<dbReference type="IntAct" id="P10635">
    <property type="interactions" value="1"/>
</dbReference>
<dbReference type="STRING" id="9606.ENSP00000496150"/>
<dbReference type="BindingDB" id="P10635"/>
<dbReference type="ChEMBL" id="CHEMBL289"/>
<dbReference type="DrugBank" id="DB07621">
    <property type="generic name" value="(5-(PYRIDIN-3-YL)FURAN-2-YL)METHANAMINE"/>
</dbReference>
<dbReference type="DrugBank" id="DB01562">
    <property type="generic name" value="1-(2-Phenylethyl)-4-phenyl-4-acetoxypiperidine"/>
</dbReference>
<dbReference type="DrugBank" id="DB01472">
    <property type="generic name" value="4-Methoxyamphetamine"/>
</dbReference>
<dbReference type="DrugBank" id="DB14010">
    <property type="generic name" value="5-methoxy-N,N-dimethyltryptamine"/>
</dbReference>
<dbReference type="DrugBank" id="DB12001">
    <property type="generic name" value="Abemaciclib"/>
</dbReference>
<dbReference type="DrugBank" id="DB05812">
    <property type="generic name" value="Abiraterone"/>
</dbReference>
<dbReference type="DrugBank" id="DB01193">
    <property type="generic name" value="Acebutolol"/>
</dbReference>
<dbReference type="DrugBank" id="DB00316">
    <property type="generic name" value="Acetaminophen"/>
</dbReference>
<dbReference type="DrugBank" id="DB15568">
    <property type="generic name" value="Adagrasib"/>
</dbReference>
<dbReference type="DrugBank" id="DB00918">
    <property type="generic name" value="Almotriptan"/>
</dbReference>
<dbReference type="DrugBank" id="DB06203">
    <property type="generic name" value="Alogliptin"/>
</dbReference>
<dbReference type="DrugBank" id="DB00866">
    <property type="generic name" value="Alprenolol"/>
</dbReference>
<dbReference type="DrugBank" id="DB01424">
    <property type="generic name" value="Aminophenazone"/>
</dbReference>
<dbReference type="DrugBank" id="DB01118">
    <property type="generic name" value="Amiodarone"/>
</dbReference>
<dbReference type="DrugBank" id="DB00321">
    <property type="generic name" value="Amitriptyline"/>
</dbReference>
<dbReference type="DrugBank" id="DB00381">
    <property type="generic name" value="Amlodipine"/>
</dbReference>
<dbReference type="DrugBank" id="DB00613">
    <property type="generic name" value="Amodiaquine"/>
</dbReference>
<dbReference type="DrugBank" id="DB00543">
    <property type="generic name" value="Amoxapine"/>
</dbReference>
<dbReference type="DrugBank" id="DB00182">
    <property type="generic name" value="Amphetamine"/>
</dbReference>
<dbReference type="DrugBank" id="DB00701">
    <property type="generic name" value="Amprenavir"/>
</dbReference>
<dbReference type="DrugBank" id="DB11785">
    <property type="generic name" value="Anisodamine"/>
</dbReference>
<dbReference type="DrugBank" id="DB01435">
    <property type="generic name" value="Antipyrine"/>
</dbReference>
<dbReference type="DrugBank" id="DB01429">
    <property type="generic name" value="Aprindine"/>
</dbReference>
<dbReference type="DrugBank" id="DB01274">
    <property type="generic name" value="Arformoterol"/>
</dbReference>
<dbReference type="DrugBank" id="DB01238">
    <property type="generic name" value="Aripiprazole"/>
</dbReference>
<dbReference type="DrugBank" id="DB14185">
    <property type="generic name" value="Aripiprazole lauroxil"/>
</dbReference>
<dbReference type="DrugBank" id="DB09204">
    <property type="generic name" value="Arotinolol"/>
</dbReference>
<dbReference type="DrugBank" id="DB11638">
    <property type="generic name" value="Artenimol"/>
</dbReference>
<dbReference type="DrugBank" id="DB06216">
    <property type="generic name" value="Asenapine"/>
</dbReference>
<dbReference type="DrugBank" id="DB00637">
    <property type="generic name" value="Astemizole"/>
</dbReference>
<dbReference type="DrugBank" id="DB11586">
    <property type="generic name" value="Asunaprevir"/>
</dbReference>
<dbReference type="DrugBank" id="DB00335">
    <property type="generic name" value="Atenolol"/>
</dbReference>
<dbReference type="DrugBank" id="DB00289">
    <property type="generic name" value="Atomoxetine"/>
</dbReference>
<dbReference type="DrugBank" id="DB01076">
    <property type="generic name" value="Atorvastatin"/>
</dbReference>
<dbReference type="DrugBank" id="DB00972">
    <property type="generic name" value="Azelastine"/>
</dbReference>
<dbReference type="DrugBank" id="DB04957">
    <property type="generic name" value="Azimilide"/>
</dbReference>
<dbReference type="DrugBank" id="DB09013">
    <property type="generic name" value="Befunolol"/>
</dbReference>
<dbReference type="DrugBank" id="DB16703">
    <property type="generic name" value="Belumosudil"/>
</dbReference>
<dbReference type="DrugBank" id="DB19353">
    <property type="generic name" value="Benzgalantamine"/>
</dbReference>
<dbReference type="DrugBank" id="DB01086">
    <property type="generic name" value="Benzocaine"/>
</dbReference>
<dbReference type="DrugBank" id="DB06770">
    <property type="generic name" value="Benzyl alcohol"/>
</dbReference>
<dbReference type="DrugBank" id="DB01244">
    <property type="generic name" value="Bepridil"/>
</dbReference>
<dbReference type="DrugBank" id="DB15982">
    <property type="generic name" value="Berotralstat"/>
</dbReference>
<dbReference type="DrugBank" id="DB00195">
    <property type="generic name" value="Betaxolol"/>
</dbReference>
<dbReference type="DrugBank" id="DB01295">
    <property type="generic name" value="Bevantolol"/>
</dbReference>
<dbReference type="DrugBank" id="DB12236">
    <property type="generic name" value="Bexagliflozin"/>
</dbReference>
<dbReference type="DrugBank" id="DB01128">
    <property type="generic name" value="Bicalutamide"/>
</dbReference>
<dbReference type="DrugBank" id="DB04889">
    <property type="generic name" value="Bicifadine"/>
</dbReference>
<dbReference type="DrugBank" id="DB00810">
    <property type="generic name" value="Biperiden"/>
</dbReference>
<dbReference type="DrugBank" id="DB13975">
    <property type="generic name" value="Black cohosh"/>
</dbReference>
<dbReference type="DrugBank" id="DB08807">
    <property type="generic name" value="Bopindolol"/>
</dbReference>
<dbReference type="DrugBank" id="DB00188">
    <property type="generic name" value="Bortezomib"/>
</dbReference>
<dbReference type="DrugBank" id="DB09128">
    <property type="generic name" value="Brexpiprazole"/>
</dbReference>
<dbReference type="DrugBank" id="DB12151">
    <property type="generic name" value="Brincidofovir"/>
</dbReference>
<dbReference type="DrugBank" id="DB12752">
    <property type="generic name" value="Bucindolol"/>
</dbReference>
<dbReference type="DrugBank" id="DB06726">
    <property type="generic name" value="Bufuralol"/>
</dbReference>
<dbReference type="DrugBank" id="DB00297">
    <property type="generic name" value="Bupivacaine"/>
</dbReference>
<dbReference type="DrugBank" id="DB08808">
    <property type="generic name" value="Bupranolol"/>
</dbReference>
<dbReference type="DrugBank" id="DB00921">
    <property type="generic name" value="Buprenorphine"/>
</dbReference>
<dbReference type="DrugBank" id="DB01156">
    <property type="generic name" value="Bupropion"/>
</dbReference>
<dbReference type="DrugBank" id="DB00490">
    <property type="generic name" value="Buspirone"/>
</dbReference>
<dbReference type="DrugBank" id="DB09173">
    <property type="generic name" value="Butyrfentanyl"/>
</dbReference>
<dbReference type="DrugBank" id="DB00201">
    <property type="generic name" value="Caffeine"/>
</dbReference>
<dbReference type="DrugBank" id="DB09061">
    <property type="generic name" value="Cannabidiol"/>
</dbReference>
<dbReference type="DrugBank" id="DB14737">
    <property type="generic name" value="Cannabinol"/>
</dbReference>
<dbReference type="DrugBank" id="DB06016">
    <property type="generic name" value="Cariprazine"/>
</dbReference>
<dbReference type="DrugBank" id="DB00521">
    <property type="generic name" value="Carteolol"/>
</dbReference>
<dbReference type="DrugBank" id="DB01136">
    <property type="generic name" value="Carvedilol"/>
</dbReference>
<dbReference type="DrugBank" id="DB00482">
    <property type="generic name" value="Celecoxib"/>
</dbReference>
<dbReference type="DrugBank" id="DB04846">
    <property type="generic name" value="Celiprolol"/>
</dbReference>
<dbReference type="DrugBank" id="DB00439">
    <property type="generic name" value="Cerivastatin"/>
</dbReference>
<dbReference type="DrugBank" id="DB00185">
    <property type="generic name" value="Cevimeline"/>
</dbReference>
<dbReference type="DrugBank" id="DB00608">
    <property type="generic name" value="Chloroquine"/>
</dbReference>
<dbReference type="DrugBank" id="DB01114">
    <property type="generic name" value="Chlorpheniramine"/>
</dbReference>
<dbReference type="DrugBank" id="DB00477">
    <property type="generic name" value="Chlorpromazine"/>
</dbReference>
<dbReference type="DrugBank" id="DB00356">
    <property type="generic name" value="Chlorzoxazone"/>
</dbReference>
<dbReference type="DrugBank" id="DB01410">
    <property type="generic name" value="Ciclesonide"/>
</dbReference>
<dbReference type="DrugBank" id="DB01166">
    <property type="generic name" value="Cilostazol"/>
</dbReference>
<dbReference type="DrugBank" id="DB00501">
    <property type="generic name" value="Cimetidine"/>
</dbReference>
<dbReference type="DrugBank" id="DB01012">
    <property type="generic name" value="Cinacalcet"/>
</dbReference>
<dbReference type="DrugBank" id="DB00568">
    <property type="generic name" value="Cinnarizine"/>
</dbReference>
<dbReference type="DrugBank" id="DB00604">
    <property type="generic name" value="Cisapride"/>
</dbReference>
<dbReference type="DrugBank" id="DB00215">
    <property type="generic name" value="Citalopram"/>
</dbReference>
<dbReference type="DrugBank" id="DB12499">
    <property type="generic name" value="Clascoterone"/>
</dbReference>
<dbReference type="DrugBank" id="DB00283">
    <property type="generic name" value="Clemastine"/>
</dbReference>
<dbReference type="DrugBank" id="DB04920">
    <property type="generic name" value="Clevidipine"/>
</dbReference>
<dbReference type="DrugBank" id="DB14025">
    <property type="generic name" value="Clinafloxacin"/>
</dbReference>
<dbReference type="DrugBank" id="DB00349">
    <property type="generic name" value="Clobazam"/>
</dbReference>
<dbReference type="DrugBank" id="DB00845">
    <property type="generic name" value="Clofazimine"/>
</dbReference>
<dbReference type="DrugBank" id="DB01242">
    <property type="generic name" value="Clomipramine"/>
</dbReference>
<dbReference type="DrugBank" id="DB00575">
    <property type="generic name" value="Clonidine"/>
</dbReference>
<dbReference type="DrugBank" id="DB13508">
    <property type="generic name" value="Cloranolol"/>
</dbReference>
<dbReference type="DrugBank" id="DB00257">
    <property type="generic name" value="Clotrimazole"/>
</dbReference>
<dbReference type="DrugBank" id="DB00363">
    <property type="generic name" value="Clozapine"/>
</dbReference>
<dbReference type="DrugBank" id="DB09065">
    <property type="generic name" value="Cobicistat"/>
</dbReference>
<dbReference type="DrugBank" id="DB05239">
    <property type="generic name" value="Cobimetinib"/>
</dbReference>
<dbReference type="DrugBank" id="DB00907">
    <property type="generic name" value="Cocaine"/>
</dbReference>
<dbReference type="DrugBank" id="DB00318">
    <property type="generic name" value="Codeine"/>
</dbReference>
<dbReference type="DrugBank" id="DB11672">
    <property type="generic name" value="Curcumin"/>
</dbReference>
<dbReference type="DrugBank" id="DB14635">
    <property type="generic name" value="Curcumin sulfate"/>
</dbReference>
<dbReference type="DrugBank" id="DB00924">
    <property type="generic name" value="Cyclobenzaprine"/>
</dbReference>
<dbReference type="DrugBank" id="DB00091">
    <property type="generic name" value="Cyclosporine"/>
</dbReference>
<dbReference type="DrugBank" id="DB11963">
    <property type="generic name" value="Dacomitinib"/>
</dbReference>
<dbReference type="DrugBank" id="DB06292">
    <property type="generic name" value="Dapagliflozin"/>
</dbReference>
<dbReference type="DrugBank" id="DB04884">
    <property type="generic name" value="Dapoxetine"/>
</dbReference>
<dbReference type="DrugBank" id="DB00496">
    <property type="generic name" value="Darifenacin"/>
</dbReference>
<dbReference type="DrugBank" id="DB01264">
    <property type="generic name" value="Darunavir"/>
</dbReference>
<dbReference type="DrugBank" id="DB09183">
    <property type="generic name" value="Dasabuvir"/>
</dbReference>
<dbReference type="DrugBank" id="DB04840">
    <property type="generic name" value="Debrisoquine"/>
</dbReference>
<dbReference type="DrugBank" id="DB00705">
    <property type="generic name" value="Delavirdine"/>
</dbReference>
<dbReference type="DrugBank" id="DB06512">
    <property type="generic name" value="Deramciclane"/>
</dbReference>
<dbReference type="DrugBank" id="DB01151">
    <property type="generic name" value="Desipramine"/>
</dbReference>
<dbReference type="DrugBank" id="DB06700">
    <property type="generic name" value="Desvenlafaxine"/>
</dbReference>
<dbReference type="DrugBank" id="DB16650">
    <property type="generic name" value="Deucravacitinib"/>
</dbReference>
<dbReference type="DrugBank" id="DB12161">
    <property type="generic name" value="Deutetrabenazine"/>
</dbReference>
<dbReference type="DrugBank" id="DB13679">
    <property type="generic name" value="Dexchlorpheniramine"/>
</dbReference>
<dbReference type="DrugBank" id="DB09555">
    <property type="generic name" value="Dexchlorpheniramine maleate"/>
</dbReference>
<dbReference type="DrugBank" id="DB01191">
    <property type="generic name" value="Dexfenfluramine"/>
</dbReference>
<dbReference type="DrugBank" id="DB00633">
    <property type="generic name" value="Dexmedetomidine"/>
</dbReference>
<dbReference type="DrugBank" id="DB01576">
    <property type="generic name" value="Dextroamphetamine"/>
</dbReference>
<dbReference type="DrugBank" id="DB00514">
    <property type="generic name" value="Dextromethorphan"/>
</dbReference>
<dbReference type="DrugBank" id="DB00647">
    <property type="generic name" value="Dextropropoxyphene"/>
</dbReference>
<dbReference type="DrugBank" id="DB11994">
    <property type="generic name" value="Diacerein"/>
</dbReference>
<dbReference type="DrugBank" id="DB01551">
    <property type="generic name" value="Dihydrocodeine"/>
</dbReference>
<dbReference type="DrugBank" id="DB00343">
    <property type="generic name" value="Diltiazem"/>
</dbReference>
<dbReference type="DrugBank" id="DB01093">
    <property type="generic name" value="Dimethyl sulfoxide"/>
</dbReference>
<dbReference type="DrugBank" id="DB01075">
    <property type="generic name" value="Diphenhydramine"/>
</dbReference>
<dbReference type="DrugBank" id="DB00757">
    <property type="generic name" value="Dolasetron"/>
</dbReference>
<dbReference type="DrugBank" id="DB01184">
    <property type="generic name" value="Domperidone"/>
</dbReference>
<dbReference type="DrugBank" id="DB00843">
    <property type="generic name" value="Donepezil"/>
</dbReference>
<dbReference type="DrugBank" id="DB09167">
    <property type="generic name" value="Dosulepin"/>
</dbReference>
<dbReference type="DrugBank" id="DB00590">
    <property type="generic name" value="Doxazosin"/>
</dbReference>
<dbReference type="DrugBank" id="DB01142">
    <property type="generic name" value="Doxepin"/>
</dbReference>
<dbReference type="DrugBank" id="DB00997">
    <property type="generic name" value="Doxorubicin"/>
</dbReference>
<dbReference type="DrugBank" id="DB00470">
    <property type="generic name" value="Dronabinol"/>
</dbReference>
<dbReference type="DrugBank" id="DB04855">
    <property type="generic name" value="Dronedarone"/>
</dbReference>
<dbReference type="DrugBank" id="DB00476">
    <property type="generic name" value="Duloxetine"/>
</dbReference>
<dbReference type="DrugBank" id="DB00625">
    <property type="generic name" value="Efavirenz"/>
</dbReference>
<dbReference type="DrugBank" id="DB11979">
    <property type="generic name" value="Elagolix"/>
</dbReference>
<dbReference type="DrugBank" id="DB00216">
    <property type="generic name" value="Eletriptan"/>
</dbReference>
<dbReference type="DrugBank" id="DB15444">
    <property type="generic name" value="Elexacaftor"/>
</dbReference>
<dbReference type="DrugBank" id="DB09039">
    <property type="generic name" value="Eliglustat"/>
</dbReference>
<dbReference type="DrugBank" id="DB13874">
    <property type="generic name" value="Enasidenib"/>
</dbReference>
<dbReference type="DrugBank" id="DB01228">
    <property type="generic name" value="Encainide"/>
</dbReference>
<dbReference type="DrugBank" id="DB06735">
    <property type="generic name" value="Enclomiphene"/>
</dbReference>
<dbReference type="DrugBank" id="DB11718">
    <property type="generic name" value="Encorafenib"/>
</dbReference>
<dbReference type="DrugBank" id="DB16157">
    <property type="generic name" value="Ensifentrine"/>
</dbReference>
<dbReference type="DrugBank" id="DB00494">
    <property type="generic name" value="Entacapone"/>
</dbReference>
<dbReference type="DrugBank" id="DB13757">
    <property type="generic name" value="Epanolol"/>
</dbReference>
<dbReference type="DrugBank" id="DB00751">
    <property type="generic name" value="Epinastine"/>
</dbReference>
<dbReference type="DrugBank" id="DB00530">
    <property type="generic name" value="Erlotinib"/>
</dbReference>
<dbReference type="DrugBank" id="DB13443">
    <property type="generic name" value="Esatenolol"/>
</dbReference>
<dbReference type="DrugBank" id="DB01175">
    <property type="generic name" value="Escitalopram"/>
</dbReference>
<dbReference type="DrugBank" id="DB06678">
    <property type="generic name" value="Esmirtazapine"/>
</dbReference>
<dbReference type="DrugBank" id="DB00187">
    <property type="generic name" value="Esmolol"/>
</dbReference>
<dbReference type="DrugBank" id="DB00330">
    <property type="generic name" value="Ethambutol"/>
</dbReference>
<dbReference type="DrugBank" id="DB01466">
    <property type="generic name" value="Ethylmorphine"/>
</dbReference>
<dbReference type="DrugBank" id="DB01628">
    <property type="generic name" value="Etoricoxib"/>
</dbReference>
<dbReference type="DrugBank" id="DB01590">
    <property type="generic name" value="Everolimus"/>
</dbReference>
<dbReference type="DrugBank" id="DB12500">
    <property type="generic name" value="Fedratinib"/>
</dbReference>
<dbReference type="DrugBank" id="DB01023">
    <property type="generic name" value="Felodipine"/>
</dbReference>
<dbReference type="DrugBank" id="DB00574">
    <property type="generic name" value="Fenfluramine"/>
</dbReference>
<dbReference type="DrugBank" id="DB06702">
    <property type="generic name" value="Fesoterodine"/>
</dbReference>
<dbReference type="DrugBank" id="DB12265">
    <property type="generic name" value="Fexinidazole"/>
</dbReference>
<dbReference type="DrugBank" id="DB01195">
    <property type="generic name" value="Flecainide"/>
</dbReference>
<dbReference type="DrugBank" id="DB04841">
    <property type="generic name" value="Flunarizine"/>
</dbReference>
<dbReference type="DrugBank" id="DB00472">
    <property type="generic name" value="Fluoxetine"/>
</dbReference>
<dbReference type="DrugBank" id="DB00623">
    <property type="generic name" value="Fluphenazine"/>
</dbReference>
<dbReference type="DrugBank" id="DB01095">
    <property type="generic name" value="Fluvastatin"/>
</dbReference>
<dbReference type="DrugBank" id="DB00176">
    <property type="generic name" value="Fluvoxamine"/>
</dbReference>
<dbReference type="DrugBank" id="DB00983">
    <property type="generic name" value="Formoterol"/>
</dbReference>
<dbReference type="DrugBank" id="DB02703">
    <property type="generic name" value="Fusidic acid"/>
</dbReference>
<dbReference type="DrugBank" id="DB15149">
    <property type="generic name" value="Futibatinib"/>
</dbReference>
<dbReference type="DrugBank" id="DB00674">
    <property type="generic name" value="Galantamine"/>
</dbReference>
<dbReference type="DrugBank" id="DB05087">
    <property type="generic name" value="Ganaxolone"/>
</dbReference>
<dbReference type="DrugBank" id="DB00317">
    <property type="generic name" value="Gefitinib"/>
</dbReference>
<dbReference type="DrugBank" id="DB01437">
    <property type="generic name" value="Glutethimide"/>
</dbReference>
<dbReference type="DrugBank" id="DB08909">
    <property type="generic name" value="Glycerol phenylbutyrate"/>
</dbReference>
<dbReference type="DrugBank" id="DB00986">
    <property type="generic name" value="Glycopyrronium"/>
</dbReference>
<dbReference type="DrugBank" id="DB01218">
    <property type="generic name" value="Halofantrine"/>
</dbReference>
<dbReference type="DrugBank" id="DB00502">
    <property type="generic name" value="Haloperidol"/>
</dbReference>
<dbReference type="DrugBank" id="DB00956">
    <property type="generic name" value="Hydrocodone"/>
</dbReference>
<dbReference type="DrugBank" id="DB01611">
    <property type="generic name" value="Hydroxychloroquine"/>
</dbReference>
<dbReference type="DrugBank" id="DB00557">
    <property type="generic name" value="Hydroxyzine"/>
</dbReference>
<dbReference type="DrugBank" id="DB09053">
    <property type="generic name" value="Ibrutinib"/>
</dbReference>
<dbReference type="DrugBank" id="DB01177">
    <property type="generic name" value="Idarubicin"/>
</dbReference>
<dbReference type="DrugBank" id="DB04946">
    <property type="generic name" value="Iloperidone"/>
</dbReference>
<dbReference type="DrugBank" id="DB00619">
    <property type="generic name" value="Imatinib"/>
</dbReference>
<dbReference type="DrugBank" id="DB00458">
    <property type="generic name" value="Imipramine"/>
</dbReference>
<dbReference type="DrugBank" id="DB08952">
    <property type="generic name" value="Indenolol"/>
</dbReference>
<dbReference type="DrugBank" id="DB00224">
    <property type="generic name" value="Indinavir"/>
</dbReference>
<dbReference type="DrugBank" id="DB06370">
    <property type="generic name" value="Indisulam"/>
</dbReference>
<dbReference type="DrugBank" id="DB13293">
    <property type="generic name" value="Ipecac"/>
</dbReference>
<dbReference type="DrugBank" id="DB04818">
    <property type="generic name" value="Iproniazid"/>
</dbReference>
<dbReference type="DrugBank" id="DB16200">
    <property type="generic name" value="Iptacopan"/>
</dbReference>
<dbReference type="DrugBank" id="DB11633">
    <property type="generic name" value="Isavuconazole"/>
</dbReference>
<dbReference type="DrugBank" id="DB06636">
    <property type="generic name" value="Isavuconazonium"/>
</dbReference>
<dbReference type="DrugBank" id="DB00951">
    <property type="generic name" value="Isoniazid"/>
</dbReference>
<dbReference type="DrugBank" id="DB11757">
    <property type="generic name" value="Istradefylline"/>
</dbReference>
<dbReference type="DrugBank" id="DB00602">
    <property type="generic name" value="Ivermectin"/>
</dbReference>
<dbReference type="DrugBank" id="DB09570">
    <property type="generic name" value="Ixazomib"/>
</dbReference>
<dbReference type="DrugBank" id="DB01026">
    <property type="generic name" value="Ketoconazole"/>
</dbReference>
<dbReference type="DrugBank" id="DB00598">
    <property type="generic name" value="Labetalol"/>
</dbReference>
<dbReference type="DrugBank" id="DB12212">
    <property type="generic name" value="Landiolol"/>
</dbReference>
<dbReference type="DrugBank" id="DB00448">
    <property type="generic name" value="Lansoprazole"/>
</dbReference>
<dbReference type="DrugBank" id="DB11732">
    <property type="generic name" value="Lasmiditan"/>
</dbReference>
<dbReference type="DrugBank" id="DB16217">
    <property type="generic name" value="Leniolisib"/>
</dbReference>
<dbReference type="DrugBank" id="DB09078">
    <property type="generic name" value="Lenvatinib"/>
</dbReference>
<dbReference type="DrugBank" id="DB00528">
    <property type="generic name" value="Lercanidipine"/>
</dbReference>
<dbReference type="DrugBank" id="DB12070">
    <property type="generic name" value="Letermovir"/>
</dbReference>
<dbReference type="DrugBank" id="DB09351">
    <property type="generic name" value="Levobetaxolol"/>
</dbReference>
<dbReference type="DrugBank" id="DB01210">
    <property type="generic name" value="Levobunolol"/>
</dbReference>
<dbReference type="DrugBank" id="DB08918">
    <property type="generic name" value="Levomilnacipran"/>
</dbReference>
<dbReference type="DrugBank" id="DB00281">
    <property type="generic name" value="Lidocaine"/>
</dbReference>
<dbReference type="DrugBank" id="DB04948">
    <property type="generic name" value="Lofexidine"/>
</dbReference>
<dbReference type="DrugBank" id="DB01206">
    <property type="generic name" value="Lomustine"/>
</dbReference>
<dbReference type="DrugBank" id="DB00836">
    <property type="generic name" value="Loperamide"/>
</dbReference>
<dbReference type="DrugBank" id="DB01601">
    <property type="generic name" value="Lopinavir"/>
</dbReference>
<dbReference type="DrugBank" id="DB00455">
    <property type="generic name" value="Loratadine"/>
</dbReference>
<dbReference type="DrugBank" id="DB04871">
    <property type="generic name" value="Lorcaserin"/>
</dbReference>
<dbReference type="DrugBank" id="DB09195">
    <property type="generic name" value="Lorpiprazole"/>
</dbReference>
<dbReference type="DrugBank" id="DB06708">
    <property type="generic name" value="Lumefantrine"/>
</dbReference>
<dbReference type="DrugBank" id="DB04829">
    <property type="generic name" value="Lysergic acid diethylamide"/>
</dbReference>
<dbReference type="DrugBank" id="DB09238">
    <property type="generic name" value="Manidipine"/>
</dbReference>
<dbReference type="DrugBank" id="DB00934">
    <property type="generic name" value="Maprotiline"/>
</dbReference>
<dbReference type="DrugBank" id="DB14921">
    <property type="generic name" value="Mavacamten"/>
</dbReference>
<dbReference type="DrugBank" id="DB05501">
    <property type="generic name" value="Mavorixafor"/>
</dbReference>
<dbReference type="DrugBank" id="DB00737">
    <property type="generic name" value="Meclizine"/>
</dbReference>
<dbReference type="DrugBank" id="DB14009">
    <property type="generic name" value="Medical Cannabis"/>
</dbReference>
<dbReference type="DrugBank" id="DB09224">
    <property type="generic name" value="Melperone"/>
</dbReference>
<dbReference type="DrugBank" id="DB00170">
    <property type="generic name" value="Menadione"/>
</dbReference>
<dbReference type="DrugBank" id="DB00454">
    <property type="generic name" value="Meperidine"/>
</dbReference>
<dbReference type="DrugBank" id="DB00532">
    <property type="generic name" value="Mephenytoin"/>
</dbReference>
<dbReference type="DrugBank" id="DB13530">
    <property type="generic name" value="Mepindolol"/>
</dbReference>
<dbReference type="DrugBank" id="DB06691">
    <property type="generic name" value="Mepyramine"/>
</dbReference>
<dbReference type="DrugBank" id="DB01071">
    <property type="generic name" value="Mequitazine"/>
</dbReference>
<dbReference type="DrugBank" id="DB00933">
    <property type="generic name" value="Mesoridazine"/>
</dbReference>
<dbReference type="DrugBank" id="DB01577">
    <property type="generic name" value="Metamfetamine"/>
</dbReference>
<dbReference type="DrugBank" id="DB00333">
    <property type="generic name" value="Methadone"/>
</dbReference>
<dbReference type="DrugBank" id="DB00763">
    <property type="generic name" value="Methimazole"/>
</dbReference>
<dbReference type="DrugBank" id="DB01403">
    <property type="generic name" value="Methotrimeprazine"/>
</dbReference>
<dbReference type="DrugBank" id="DB01028">
    <property type="generic name" value="Methoxyflurane"/>
</dbReference>
<dbReference type="DrugBank" id="DB09241">
    <property type="generic name" value="Methylene blue"/>
</dbReference>
<dbReference type="DrugBank" id="DB01214">
    <property type="generic name" value="Metipranolol"/>
</dbReference>
<dbReference type="DrugBank" id="DB01233">
    <property type="generic name" value="Metoclopramide"/>
</dbReference>
<dbReference type="DrugBank" id="DB00264">
    <property type="generic name" value="Metoprolol"/>
</dbReference>
<dbReference type="DrugBank" id="DB00379">
    <property type="generic name" value="Mexiletine"/>
</dbReference>
<dbReference type="DrugBank" id="DB06148">
    <property type="generic name" value="Mianserin"/>
</dbReference>
<dbReference type="DrugBank" id="DB01388">
    <property type="generic name" value="Mibefradil"/>
</dbReference>
<dbReference type="DrugBank" id="DB01110">
    <property type="generic name" value="Miconazole"/>
</dbReference>
<dbReference type="DrugBank" id="DB00211">
    <property type="generic name" value="Midodrine"/>
</dbReference>
<dbReference type="DrugBank" id="DB01454">
    <property type="generic name" value="Midomafetamine"/>
</dbReference>
<dbReference type="DrugBank" id="DB06595">
    <property type="generic name" value="Midostaurin"/>
</dbReference>
<dbReference type="DrugBank" id="DB00834">
    <property type="generic name" value="Mifepristone"/>
</dbReference>
<dbReference type="DrugBank" id="DB00805">
    <property type="generic name" value="Minaprine"/>
</dbReference>
<dbReference type="DrugBank" id="DB08893">
    <property type="generic name" value="Mirabegron"/>
</dbReference>
<dbReference type="DrugBank" id="DB00370">
    <property type="generic name" value="Mirtazapine"/>
</dbReference>
<dbReference type="DrugBank" id="DB12523">
    <property type="generic name" value="Mizolastine"/>
</dbReference>
<dbReference type="DrugBank" id="DB01171">
    <property type="generic name" value="Moclobemide"/>
</dbReference>
<dbReference type="DrugBank" id="DB00745">
    <property type="generic name" value="Modafinil"/>
</dbReference>
<dbReference type="DrugBank" id="DB14011">
    <property type="generic name" value="Nabiximols"/>
</dbReference>
<dbReference type="DrugBank" id="DB09049">
    <property type="generic name" value="Naloxegol"/>
</dbReference>
<dbReference type="DrugBank" id="DB00731">
    <property type="generic name" value="Nateglinide"/>
</dbReference>
<dbReference type="DrugBank" id="DB04861">
    <property type="generic name" value="Nebivolol"/>
</dbReference>
<dbReference type="DrugBank" id="DB01149">
    <property type="generic name" value="Nefazodone"/>
</dbReference>
<dbReference type="DrugBank" id="DB00220">
    <property type="generic name" value="Nelfinavir"/>
</dbReference>
<dbReference type="DrugBank" id="DB09048">
    <property type="generic name" value="Netupitant"/>
</dbReference>
<dbReference type="DrugBank" id="DB00238">
    <property type="generic name" value="Nevirapine"/>
</dbReference>
<dbReference type="DrugBank" id="DB00627">
    <property type="generic name" value="Niacin"/>
</dbReference>
<dbReference type="DrugBank" id="DB00622">
    <property type="generic name" value="Nicardipine"/>
</dbReference>
<dbReference type="DrugBank" id="DB00699">
    <property type="generic name" value="Nicergoline"/>
</dbReference>
<dbReference type="DrugBank" id="DB02701">
    <property type="generic name" value="Nicotinamide"/>
</dbReference>
<dbReference type="DrugBank" id="DB00184">
    <property type="generic name" value="Nicotine"/>
</dbReference>
<dbReference type="DrugBank" id="DB01115">
    <property type="generic name" value="Nifedipine"/>
</dbReference>
<dbReference type="DrugBank" id="DB04868">
    <property type="generic name" value="Nilotinib"/>
</dbReference>
<dbReference type="DrugBank" id="DB12005">
    <property type="generic name" value="Nirogacestat"/>
</dbReference>
<dbReference type="DrugBank" id="DB00540">
    <property type="generic name" value="Nortriptyline"/>
</dbReference>
<dbReference type="DrugBank" id="DB00334">
    <property type="generic name" value="Olanzapine"/>
</dbReference>
<dbReference type="DrugBank" id="DB14881">
    <property type="generic name" value="Oliceridine"/>
</dbReference>
<dbReference type="DrugBank" id="DB00338">
    <property type="generic name" value="Omeprazole"/>
</dbReference>
<dbReference type="DrugBank" id="DB00904">
    <property type="generic name" value="Ondansetron"/>
</dbReference>
<dbReference type="DrugBank" id="DB11130">
    <property type="generic name" value="Opium"/>
</dbReference>
<dbReference type="DrugBank" id="DB04911">
    <property type="generic name" value="Oritavancin"/>
</dbReference>
<dbReference type="DrugBank" id="DB01173">
    <property type="generic name" value="Orphenadrine"/>
</dbReference>
<dbReference type="DrugBank" id="DB11837">
    <property type="generic name" value="Osilodrostat"/>
</dbReference>
<dbReference type="DrugBank" id="DB04938">
    <property type="generic name" value="Ospemifene"/>
</dbReference>
<dbReference type="DrugBank" id="DB01096">
    <property type="generic name" value="Oxamniquine"/>
</dbReference>
<dbReference type="DrugBank" id="DB01580">
    <property type="generic name" value="Oxprenolol"/>
</dbReference>
<dbReference type="DrugBank" id="DB01062">
    <property type="generic name" value="Oxybutynin"/>
</dbReference>
<dbReference type="DrugBank" id="DB00497">
    <property type="generic name" value="Oxycodone"/>
</dbReference>
<dbReference type="DrugBank" id="DB06412">
    <property type="generic name" value="Oxymetholone"/>
</dbReference>
<dbReference type="DrugBank" id="DB01192">
    <property type="generic name" value="Oxymorphone"/>
</dbReference>
<dbReference type="DrugBank" id="DB01267">
    <property type="generic name" value="Paliperidone"/>
</dbReference>
<dbReference type="DrugBank" id="DB00377">
    <property type="generic name" value="Palonosetron"/>
</dbReference>
<dbReference type="DrugBank" id="DB06603">
    <property type="generic name" value="Panobinostat"/>
</dbReference>
<dbReference type="DrugBank" id="DB00715">
    <property type="generic name" value="Paroxetine"/>
</dbReference>
<dbReference type="DrugBank" id="DB06589">
    <property type="generic name" value="Pazopanib"/>
</dbReference>
<dbReference type="DrugBank" id="DB00022">
    <property type="generic name" value="Peginterferon alfa-2b"/>
</dbReference>
<dbReference type="DrugBank" id="DB01359">
    <property type="generic name" value="Penbutolol"/>
</dbReference>
<dbReference type="DrugBank" id="DB00738">
    <property type="generic name" value="Pentamidine"/>
</dbReference>
<dbReference type="DrugBank" id="DB01074">
    <property type="generic name" value="Perhexiline"/>
</dbReference>
<dbReference type="DrugBank" id="DB08922">
    <property type="generic name" value="Perospirone"/>
</dbReference>
<dbReference type="DrugBank" id="DB00850">
    <property type="generic name" value="Perphenazine"/>
</dbReference>
<dbReference type="DrugBank" id="DB03783">
    <property type="generic name" value="Phenacetin"/>
</dbReference>
<dbReference type="DrugBank" id="DB00780">
    <property type="generic name" value="Phenelzine"/>
</dbReference>
<dbReference type="DrugBank" id="DB00914">
    <property type="generic name" value="Phenformin"/>
</dbReference>
<dbReference type="DrugBank" id="DB00252">
    <property type="generic name" value="Phenytoin"/>
</dbReference>
<dbReference type="DrugBank" id="DB05316">
    <property type="generic name" value="Pimavanserin"/>
</dbReference>
<dbReference type="DrugBank" id="DB01100">
    <property type="generic name" value="Pimozide"/>
</dbReference>
<dbReference type="DrugBank" id="DB00960">
    <property type="generic name" value="Pindolol"/>
</dbReference>
<dbReference type="DrugBank" id="DB00592">
    <property type="generic name" value="Piperazine"/>
</dbReference>
<dbReference type="DrugBank" id="DB01621">
    <property type="generic name" value="Pipotiazine"/>
</dbReference>
<dbReference type="DrugBank" id="DB04951">
    <property type="generic name" value="Pirfenidone"/>
</dbReference>
<dbReference type="DrugBank" id="DB17472">
    <property type="generic name" value="Pirtobrutinib"/>
</dbReference>
<dbReference type="DrugBank" id="DB11642">
    <property type="generic name" value="Pitolisant"/>
</dbReference>
<dbReference type="DrugBank" id="DB08901">
    <property type="generic name" value="Ponatinib"/>
</dbReference>
<dbReference type="DrugBank" id="DB01297">
    <property type="generic name" value="Practolol"/>
</dbReference>
<dbReference type="DrugBank" id="DB15822">
    <property type="generic name" value="Pralsetinib"/>
</dbReference>
<dbReference type="DrugBank" id="DB01087">
    <property type="generic name" value="Primaquine"/>
</dbReference>
<dbReference type="DrugBank" id="DB01035">
    <property type="generic name" value="Procainamide"/>
</dbReference>
<dbReference type="DrugBank" id="DB00433">
    <property type="generic name" value="Prochlorperazine"/>
</dbReference>
<dbReference type="DrugBank" id="DB00396">
    <property type="generic name" value="Progesterone"/>
</dbReference>
<dbReference type="DrugBank" id="DB01131">
    <property type="generic name" value="Proguanil"/>
</dbReference>
<dbReference type="DrugBank" id="DB00420">
    <property type="generic name" value="Promazine"/>
</dbReference>
<dbReference type="DrugBank" id="DB01069">
    <property type="generic name" value="Promethazine"/>
</dbReference>
<dbReference type="DrugBank" id="DB09288">
    <property type="generic name" value="Propacetamol"/>
</dbReference>
<dbReference type="DrugBank" id="DB01182">
    <property type="generic name" value="Propafenone"/>
</dbReference>
<dbReference type="DrugBank" id="DB00571">
    <property type="generic name" value="Propranolol"/>
</dbReference>
<dbReference type="DrugBank" id="DB04216">
    <property type="generic name" value="Quercetin"/>
</dbReference>
<dbReference type="DrugBank" id="DB01224">
    <property type="generic name" value="Quetiapine"/>
</dbReference>
<dbReference type="DrugBank" id="DB00908">
    <property type="generic name" value="Quinidine"/>
</dbReference>
<dbReference type="DrugBank" id="DB00468">
    <property type="generic name" value="Quinine"/>
</dbReference>
<dbReference type="DrugBank" id="DB01129">
    <property type="generic name" value="Rabeprazole"/>
</dbReference>
<dbReference type="DrugBank" id="DB00863">
    <property type="generic name" value="Ranitidine"/>
</dbReference>
<dbReference type="DrugBank" id="DB00243">
    <property type="generic name" value="Ranolazine"/>
</dbReference>
<dbReference type="DrugBank" id="DB00234">
    <property type="generic name" value="Reboxetine"/>
</dbReference>
<dbReference type="DrugBank" id="DB14761">
    <property type="generic name" value="Remdesivir"/>
</dbReference>
<dbReference type="DrugBank" id="DB00409">
    <property type="generic name" value="Remoxipride"/>
</dbReference>
<dbReference type="DrugBank" id="DB06506">
    <property type="generic name" value="Repinotan"/>
</dbReference>
<dbReference type="DrugBank" id="DB02709">
    <property type="generic name" value="Resveratrol"/>
</dbReference>
<dbReference type="DrugBank" id="DB11855">
    <property type="generic name" value="Revefenacin"/>
</dbReference>
<dbReference type="DrugBank" id="DB13174">
    <property type="generic name" value="Rhein"/>
</dbReference>
<dbReference type="DrugBank" id="DB11753">
    <property type="generic name" value="Rifamycin"/>
</dbReference>
<dbReference type="DrugBank" id="DB08864">
    <property type="generic name" value="Rilpivirine"/>
</dbReference>
<dbReference type="DrugBank" id="DB14840">
    <property type="generic name" value="Ripretinib"/>
</dbReference>
<dbReference type="DrugBank" id="DB00734">
    <property type="generic name" value="Risperidone"/>
</dbReference>
<dbReference type="DrugBank" id="DB12693">
    <property type="generic name" value="Ritanserin"/>
</dbReference>
<dbReference type="DrugBank" id="DB00503">
    <property type="generic name" value="Ritonavir"/>
</dbReference>
<dbReference type="DrugBank" id="DB00953">
    <property type="generic name" value="Rizatriptan"/>
</dbReference>
<dbReference type="DrugBank" id="DB09291">
    <property type="generic name" value="Rolapitant"/>
</dbReference>
<dbReference type="DrugBank" id="DB15119">
    <property type="generic name" value="Ropeginterferon alfa-2b"/>
</dbReference>
<dbReference type="DrugBank" id="DB00412">
    <property type="generic name" value="Rosiglitazone"/>
</dbReference>
<dbReference type="DrugBank" id="DB05271">
    <property type="generic name" value="Rotigotine"/>
</dbReference>
<dbReference type="DrugBank" id="DB12332">
    <property type="generic name" value="Rucaparib"/>
</dbReference>
<dbReference type="DrugBank" id="DB11614">
    <property type="generic name" value="Rupatadine"/>
</dbReference>
<dbReference type="DrugBank" id="DB06654">
    <property type="generic name" value="Safinamide"/>
</dbReference>
<dbReference type="DrugBank" id="DB01232">
    <property type="generic name" value="Saquinavir"/>
</dbReference>
<dbReference type="DrugBank" id="DB01037">
    <property type="generic name" value="Selegiline"/>
</dbReference>
<dbReference type="DrugBank" id="DB06144">
    <property type="generic name" value="Sertindole"/>
</dbReference>
<dbReference type="DrugBank" id="DB01104">
    <property type="generic name" value="Sertraline"/>
</dbReference>
<dbReference type="DrugBank" id="DB00203">
    <property type="generic name" value="Sildenafil"/>
</dbReference>
<dbReference type="DrugBank" id="DB00641">
    <property type="generic name" value="Simvastatin"/>
</dbReference>
<dbReference type="DrugBank" id="DB19325">
    <property type="generic name" value="Sofpironium"/>
</dbReference>
<dbReference type="DrugBank" id="DB01591">
    <property type="generic name" value="Solifenacin"/>
</dbReference>
<dbReference type="DrugBank" id="DB00398">
    <property type="generic name" value="Sorafenib"/>
</dbReference>
<dbReference type="DrugBank" id="DB12713">
    <property type="generic name" value="Sotagliflozin"/>
</dbReference>
<dbReference type="DrugBank" id="DB00489">
    <property type="generic name" value="Sotalol"/>
</dbReference>
<dbReference type="DrugBank" id="DB06727">
    <property type="generic name" value="Sparteine"/>
</dbReference>
<dbReference type="DrugBank" id="DB01323">
    <property type="generic name" value="St. John's Wort"/>
</dbReference>
<dbReference type="DrugBank" id="DB09118">
    <property type="generic name" value="Stiripentol"/>
</dbReference>
<dbReference type="DrugBank" id="DB06820">
    <property type="generic name" value="Sulconazole"/>
</dbReference>
<dbReference type="DrugBank" id="DB06729">
    <property type="generic name" value="Sulfaphenazole"/>
</dbReference>
<dbReference type="DrugBank" id="DB06608">
    <property type="generic name" value="Tafenoquine"/>
</dbReference>
<dbReference type="DrugBank" id="DB11770">
    <property type="generic name" value="Talinolol"/>
</dbReference>
<dbReference type="DrugBank" id="DB00675">
    <property type="generic name" value="Tamoxifen"/>
</dbReference>
<dbReference type="DrugBank" id="DB00706">
    <property type="generic name" value="Tamsulosin"/>
</dbReference>
<dbReference type="DrugBank" id="DB06204">
    <property type="generic name" value="Tapentadol"/>
</dbReference>
<dbReference type="DrugBank" id="DB06083">
    <property type="generic name" value="Tapinarof"/>
</dbReference>
<dbReference type="DrugBank" id="DB01079">
    <property type="generic name" value="Tegaserod"/>
</dbReference>
<dbReference type="DrugBank" id="DB12095">
    <property type="generic name" value="Telotristat ethyl"/>
</dbReference>
<dbReference type="DrugBank" id="DB06287">
    <property type="generic name" value="Temsirolimus"/>
</dbReference>
<dbReference type="DrugBank" id="DB00857">
    <property type="generic name" value="Terbinafine"/>
</dbReference>
<dbReference type="DrugBank" id="DB00342">
    <property type="generic name" value="Terfenadine"/>
</dbReference>
<dbReference type="DrugBank" id="DB13775">
    <property type="generic name" value="Tertatolol"/>
</dbReference>
<dbReference type="DrugBank" id="DB04905">
    <property type="generic name" value="Tesmilifene"/>
</dbReference>
<dbReference type="DrugBank" id="DB04844">
    <property type="generic name" value="Tetrabenazine"/>
</dbReference>
<dbReference type="DrugBank" id="DB11712">
    <property type="generic name" value="Tezacaftor"/>
</dbReference>
<dbReference type="DrugBank" id="DB00277">
    <property type="generic name" value="Theophylline"/>
</dbReference>
<dbReference type="DrugBank" id="DB00679">
    <property type="generic name" value="Thioridazine"/>
</dbReference>
<dbReference type="DrugBank" id="DB01623">
    <property type="generic name" value="Thiothixene"/>
</dbReference>
<dbReference type="DrugBank" id="DB00208">
    <property type="generic name" value="Ticlopidine"/>
</dbReference>
<dbReference type="DrugBank" id="DB00373">
    <property type="generic name" value="Timolol"/>
</dbReference>
<dbReference type="DrugBank" id="DB01409">
    <property type="generic name" value="Tiotropium"/>
</dbReference>
<dbReference type="DrugBank" id="DB00932">
    <property type="generic name" value="Tipranavir"/>
</dbReference>
<dbReference type="DrugBank" id="DB06137">
    <property type="generic name" value="Tirbanibulin"/>
</dbReference>
<dbReference type="DrugBank" id="DB01036">
    <property type="generic name" value="Tolterodine"/>
</dbReference>
<dbReference type="DrugBank" id="DB05109">
    <property type="generic name" value="Trabectedin"/>
</dbReference>
<dbReference type="DrugBank" id="DB00193">
    <property type="generic name" value="Tramadol"/>
</dbReference>
<dbReference type="DrugBank" id="DB00752">
    <property type="generic name" value="Tranylcypromine"/>
</dbReference>
<dbReference type="DrugBank" id="DB00656">
    <property type="generic name" value="Trazodone"/>
</dbReference>
<dbReference type="DrugBank" id="DB12245">
    <property type="generic name" value="Triclabendazole"/>
</dbReference>
<dbReference type="DrugBank" id="DB00726">
    <property type="generic name" value="Trimipramine"/>
</dbReference>
<dbReference type="DrugBank" id="DB00792">
    <property type="generic name" value="Tripelennamine"/>
</dbReference>
<dbReference type="DrugBank" id="DB00209">
    <property type="generic name" value="Trospium"/>
</dbReference>
<dbReference type="DrugBank" id="DB15328">
    <property type="generic name" value="Ubrogepant"/>
</dbReference>
<dbReference type="DrugBank" id="DB09076">
    <property type="generic name" value="Umeclidinium"/>
</dbReference>
<dbReference type="DrugBank" id="DB13609">
    <property type="generic name" value="Umifenovir"/>
</dbReference>
<dbReference type="DrugBank" id="DB15091">
    <property type="generic name" value="Upadacitinib"/>
</dbReference>
<dbReference type="DrugBank" id="DB11915">
    <property type="generic name" value="Valbenazine"/>
</dbReference>
<dbReference type="DrugBank" id="DB00862">
    <property type="generic name" value="Vardenafil"/>
</dbReference>
<dbReference type="DrugBank" id="DB08881">
    <property type="generic name" value="Vemurafenib"/>
</dbReference>
<dbReference type="DrugBank" id="DB00285">
    <property type="generic name" value="Venlafaxine"/>
</dbReference>
<dbReference type="DrugBank" id="DB00661">
    <property type="generic name" value="Verapamil"/>
</dbReference>
<dbReference type="DrugBank" id="DB06217">
    <property type="generic name" value="Vernakalant"/>
</dbReference>
<dbReference type="DrugBank" id="DB06684">
    <property type="generic name" value="Vilazodone"/>
</dbReference>
<dbReference type="DrugBank" id="DB09185">
    <property type="generic name" value="Viloxazine"/>
</dbReference>
<dbReference type="DrugBank" id="DB00570">
    <property type="generic name" value="Vinblastine"/>
</dbReference>
<dbReference type="DrugBank" id="DB00361">
    <property type="generic name" value="Vinorelbine"/>
</dbReference>
<dbReference type="DrugBank" id="DB11739">
    <property type="generic name" value="Vonoprazan"/>
</dbReference>
<dbReference type="DrugBank" id="DB17097">
    <property type="generic name" value="Vorasidenib"/>
</dbReference>
<dbReference type="DrugBank" id="DB09068">
    <property type="generic name" value="Vortioxetine"/>
</dbReference>
<dbReference type="DrugBank" id="DB15357">
    <property type="generic name" value="Xanomeline"/>
</dbReference>
<dbReference type="DrugBank" id="DB01392">
    <property type="generic name" value="Yohimbine"/>
</dbReference>
<dbReference type="DrugBank" id="DB00549">
    <property type="generic name" value="Zafirlukast"/>
</dbReference>
<dbReference type="DrugBank" id="DB15688">
    <property type="generic name" value="Zavegepant"/>
</dbReference>
<dbReference type="DrugBank" id="DB00425">
    <property type="generic name" value="Zolpidem"/>
</dbReference>
<dbReference type="DrugBank" id="DB01624">
    <property type="generic name" value="Zuclopenthixol"/>
</dbReference>
<dbReference type="DrugCentral" id="P10635"/>
<dbReference type="GuidetoPHARMACOLOGY" id="1329"/>
<dbReference type="SwissLipids" id="SLP:000001204"/>
<dbReference type="GlyGen" id="P10635">
    <property type="glycosylation" value="1 site"/>
</dbReference>
<dbReference type="iPTMnet" id="P10635"/>
<dbReference type="PhosphoSitePlus" id="P10635"/>
<dbReference type="BioMuta" id="CYP2D6"/>
<dbReference type="DMDM" id="84028191"/>
<dbReference type="jPOST" id="P10635"/>
<dbReference type="MassIVE" id="P10635"/>
<dbReference type="PaxDb" id="9606-ENSP00000353820"/>
<dbReference type="PeptideAtlas" id="P10635"/>
<dbReference type="ProteomicsDB" id="52623">
    <molecule id="P10635-1"/>
</dbReference>
<dbReference type="ProteomicsDB" id="66778"/>
<dbReference type="Antibodypedia" id="13178">
    <property type="antibodies" value="598 antibodies from 38 providers"/>
</dbReference>
<dbReference type="DNASU" id="1565"/>
<dbReference type="Ensembl" id="ENST00000359033.4">
    <molecule id="P10635-2"/>
    <property type="protein sequence ID" value="ENSP00000351927.4"/>
    <property type="gene ID" value="ENSG00000100197.23"/>
</dbReference>
<dbReference type="Ensembl" id="ENST00000612990.2">
    <property type="protein sequence ID" value="ENSP00000483677.1"/>
    <property type="gene ID" value="ENSG00000275211.4"/>
</dbReference>
<dbReference type="Ensembl" id="ENST00000645361.2">
    <molecule id="P10635-1"/>
    <property type="protein sequence ID" value="ENSP00000496150.1"/>
    <property type="gene ID" value="ENSG00000100197.23"/>
</dbReference>
<dbReference type="GeneID" id="1565"/>
<dbReference type="KEGG" id="hsa:1565"/>
<dbReference type="MANE-Select" id="ENST00000645361.2">
    <property type="protein sequence ID" value="ENSP00000496150.1"/>
    <property type="RefSeq nucleotide sequence ID" value="NM_000106.6"/>
    <property type="RefSeq protein sequence ID" value="NP_000097.3"/>
</dbReference>
<dbReference type="UCSC" id="uc003bce.4">
    <molecule id="P10635-1"/>
    <property type="organism name" value="human"/>
</dbReference>
<dbReference type="AGR" id="HGNC:2625"/>
<dbReference type="CTD" id="1565"/>
<dbReference type="DisGeNET" id="1565"/>
<dbReference type="GeneCards" id="CYP2D6"/>
<dbReference type="HGNC" id="HGNC:2625">
    <property type="gene designation" value="CYP2D6"/>
</dbReference>
<dbReference type="HPA" id="ENSG00000100197">
    <property type="expression patterns" value="Tissue enriched (liver)"/>
</dbReference>
<dbReference type="MalaCards" id="CYP2D6"/>
<dbReference type="MIM" id="124030">
    <property type="type" value="gene"/>
</dbReference>
<dbReference type="MIM" id="608902">
    <property type="type" value="phenotype"/>
</dbReference>
<dbReference type="neXtProt" id="NX_P10635"/>
<dbReference type="OpenTargets" id="ENSG00000100197"/>
<dbReference type="PharmGKB" id="PA128"/>
<dbReference type="VEuPathDB" id="HostDB:ENSG00000100197"/>
<dbReference type="eggNOG" id="KOG0156">
    <property type="taxonomic scope" value="Eukaryota"/>
</dbReference>
<dbReference type="GeneTree" id="ENSGT00940000153331"/>
<dbReference type="HOGENOM" id="CLU_001570_22_3_1"/>
<dbReference type="InParanoid" id="P10635"/>
<dbReference type="OMA" id="RYGHVWK"/>
<dbReference type="OrthoDB" id="3934656at2759"/>
<dbReference type="PAN-GO" id="P10635">
    <property type="GO annotations" value="7 GO annotations based on evolutionary models"/>
</dbReference>
<dbReference type="PhylomeDB" id="P10635"/>
<dbReference type="TreeFam" id="TF352043"/>
<dbReference type="BioCyc" id="MetaCyc:HS01997-MONOMER"/>
<dbReference type="BRENDA" id="1.14.14.1">
    <property type="organism ID" value="2681"/>
</dbReference>
<dbReference type="BRENDA" id="1.14.99.38">
    <property type="organism ID" value="2681"/>
</dbReference>
<dbReference type="PathwayCommons" id="P10635"/>
<dbReference type="Reactome" id="R-HSA-211935">
    <property type="pathway name" value="Fatty acids"/>
</dbReference>
<dbReference type="Reactome" id="R-HSA-211958">
    <property type="pathway name" value="Miscellaneous substrates"/>
</dbReference>
<dbReference type="Reactome" id="R-HSA-211981">
    <property type="pathway name" value="Xenobiotics"/>
</dbReference>
<dbReference type="Reactome" id="R-HSA-211999">
    <property type="pathway name" value="CYP2E1 reactions"/>
</dbReference>
<dbReference type="Reactome" id="R-HSA-9027307">
    <property type="pathway name" value="Biosynthesis of maresin-like SPMs"/>
</dbReference>
<dbReference type="Reactome" id="R-HSA-9749641">
    <property type="pathway name" value="Aspirin ADME"/>
</dbReference>
<dbReference type="SABIO-RK" id="P10635"/>
<dbReference type="SIGNOR" id="P10635"/>
<dbReference type="UniPathway" id="UPA00199"/>
<dbReference type="UniPathway" id="UPA00296"/>
<dbReference type="UniPathway" id="UPA00912"/>
<dbReference type="BioGRID-ORCS" id="1565">
    <property type="hits" value="10 hits in 1140 CRISPR screens"/>
</dbReference>
<dbReference type="EvolutionaryTrace" id="P10635"/>
<dbReference type="GeneWiki" id="CYP2D6"/>
<dbReference type="GenomeRNAi" id="1565"/>
<dbReference type="Pharos" id="P10635">
    <property type="development level" value="Tclin"/>
</dbReference>
<dbReference type="PRO" id="PR:P10635"/>
<dbReference type="Proteomes" id="UP000005640">
    <property type="component" value="Chromosome 22"/>
</dbReference>
<dbReference type="RNAct" id="P10635">
    <property type="molecule type" value="protein"/>
</dbReference>
<dbReference type="Bgee" id="ENSG00000100197">
    <property type="expression patterns" value="Expressed in right lobe of liver and 93 other cell types or tissues"/>
</dbReference>
<dbReference type="ExpressionAtlas" id="P10635">
    <property type="expression patterns" value="baseline and differential"/>
</dbReference>
<dbReference type="GO" id="GO:0005737">
    <property type="term" value="C:cytoplasm"/>
    <property type="evidence" value="ECO:0000318"/>
    <property type="project" value="GO_Central"/>
</dbReference>
<dbReference type="GO" id="GO:0005783">
    <property type="term" value="C:endoplasmic reticulum"/>
    <property type="evidence" value="ECO:0000304"/>
    <property type="project" value="BHF-UCL"/>
</dbReference>
<dbReference type="GO" id="GO:0005789">
    <property type="term" value="C:endoplasmic reticulum membrane"/>
    <property type="evidence" value="ECO:0000304"/>
    <property type="project" value="Reactome"/>
</dbReference>
<dbReference type="GO" id="GO:0043231">
    <property type="term" value="C:intracellular membrane-bounded organelle"/>
    <property type="evidence" value="ECO:0000318"/>
    <property type="project" value="GO_Central"/>
</dbReference>
<dbReference type="GO" id="GO:0005739">
    <property type="term" value="C:mitochondrion"/>
    <property type="evidence" value="ECO:0000314"/>
    <property type="project" value="BHF-UCL"/>
</dbReference>
<dbReference type="GO" id="GO:0062188">
    <property type="term" value="F:anandamide 11,12 epoxidase activity"/>
    <property type="evidence" value="ECO:0000314"/>
    <property type="project" value="UniProtKB"/>
</dbReference>
<dbReference type="GO" id="GO:0062189">
    <property type="term" value="F:anandamide 14,15 epoxidase activity"/>
    <property type="evidence" value="ECO:0000314"/>
    <property type="project" value="UniProtKB"/>
</dbReference>
<dbReference type="GO" id="GO:0062187">
    <property type="term" value="F:anandamide 8,9 epoxidase activity"/>
    <property type="evidence" value="ECO:0000314"/>
    <property type="project" value="UniProtKB"/>
</dbReference>
<dbReference type="GO" id="GO:0020037">
    <property type="term" value="F:heme binding"/>
    <property type="evidence" value="ECO:0000314"/>
    <property type="project" value="UniProtKB"/>
</dbReference>
<dbReference type="GO" id="GO:0005506">
    <property type="term" value="F:iron ion binding"/>
    <property type="evidence" value="ECO:0007669"/>
    <property type="project" value="InterPro"/>
</dbReference>
<dbReference type="GO" id="GO:0004497">
    <property type="term" value="F:monooxygenase activity"/>
    <property type="evidence" value="ECO:0000314"/>
    <property type="project" value="BHF-UCL"/>
</dbReference>
<dbReference type="GO" id="GO:0016491">
    <property type="term" value="F:oxidoreductase activity"/>
    <property type="evidence" value="ECO:0000314"/>
    <property type="project" value="BHF-UCL"/>
</dbReference>
<dbReference type="GO" id="GO:0016712">
    <property type="term" value="F:oxidoreductase activity, acting on paired donors, with incorporation or reduction of molecular oxygen, reduced flavin or flavoprotein as one donor, and incorporation of one atom of oxygen"/>
    <property type="evidence" value="ECO:0000318"/>
    <property type="project" value="GO_Central"/>
</dbReference>
<dbReference type="GO" id="GO:0009822">
    <property type="term" value="P:alkaloid catabolic process"/>
    <property type="evidence" value="ECO:0000314"/>
    <property type="project" value="BHF-UCL"/>
</dbReference>
<dbReference type="GO" id="GO:0009820">
    <property type="term" value="P:alkaloid metabolic process"/>
    <property type="evidence" value="ECO:0000314"/>
    <property type="project" value="BHF-UCL"/>
</dbReference>
<dbReference type="GO" id="GO:0019369">
    <property type="term" value="P:arachidonate metabolic process"/>
    <property type="evidence" value="ECO:0000318"/>
    <property type="project" value="GO_Central"/>
</dbReference>
<dbReference type="GO" id="GO:0008203">
    <property type="term" value="P:cholesterol metabolic process"/>
    <property type="evidence" value="ECO:0007669"/>
    <property type="project" value="UniProtKB-UniPathway"/>
</dbReference>
<dbReference type="GO" id="GO:0009804">
    <property type="term" value="P:coumarin metabolic process"/>
    <property type="evidence" value="ECO:0000314"/>
    <property type="project" value="BHF-UCL"/>
</dbReference>
<dbReference type="GO" id="GO:0008210">
    <property type="term" value="P:estrogen metabolic process"/>
    <property type="evidence" value="ECO:0000314"/>
    <property type="project" value="UniProtKB"/>
</dbReference>
<dbReference type="GO" id="GO:0033076">
    <property type="term" value="P:isoquinoline alkaloid metabolic process"/>
    <property type="evidence" value="ECO:0000314"/>
    <property type="project" value="BHF-UCL"/>
</dbReference>
<dbReference type="GO" id="GO:0042759">
    <property type="term" value="P:long-chain fatty acid biosynthetic process"/>
    <property type="evidence" value="ECO:0000304"/>
    <property type="project" value="Reactome"/>
</dbReference>
<dbReference type="GO" id="GO:0016098">
    <property type="term" value="P:monoterpenoid metabolic process"/>
    <property type="evidence" value="ECO:0000314"/>
    <property type="project" value="BHF-UCL"/>
</dbReference>
<dbReference type="GO" id="GO:0090350">
    <property type="term" value="P:negative regulation of organofluorine metabolic process"/>
    <property type="evidence" value="ECO:0000314"/>
    <property type="project" value="BHF-UCL"/>
</dbReference>
<dbReference type="GO" id="GO:0070989">
    <property type="term" value="P:oxidative demethylation"/>
    <property type="evidence" value="ECO:0000314"/>
    <property type="project" value="BHF-UCL"/>
</dbReference>
<dbReference type="GO" id="GO:0042572">
    <property type="term" value="P:retinol metabolic process"/>
    <property type="evidence" value="ECO:0000314"/>
    <property type="project" value="UniProtKB"/>
</dbReference>
<dbReference type="GO" id="GO:0008202">
    <property type="term" value="P:steroid metabolic process"/>
    <property type="evidence" value="ECO:0000315"/>
    <property type="project" value="BHF-UCL"/>
</dbReference>
<dbReference type="GO" id="GO:0042178">
    <property type="term" value="P:xenobiotic catabolic process"/>
    <property type="evidence" value="ECO:0000314"/>
    <property type="project" value="BHF-UCL"/>
</dbReference>
<dbReference type="GO" id="GO:0006805">
    <property type="term" value="P:xenobiotic metabolic process"/>
    <property type="evidence" value="ECO:0000314"/>
    <property type="project" value="BHF-UCL"/>
</dbReference>
<dbReference type="CDD" id="cd20663">
    <property type="entry name" value="CYP2D"/>
    <property type="match status" value="1"/>
</dbReference>
<dbReference type="FunFam" id="1.10.630.10:FF:000004">
    <property type="entry name" value="cytochrome P450 2D15 isoform X1"/>
    <property type="match status" value="1"/>
</dbReference>
<dbReference type="Gene3D" id="1.10.630.10">
    <property type="entry name" value="Cytochrome P450"/>
    <property type="match status" value="1"/>
</dbReference>
<dbReference type="InterPro" id="IPR001128">
    <property type="entry name" value="Cyt_P450"/>
</dbReference>
<dbReference type="InterPro" id="IPR017972">
    <property type="entry name" value="Cyt_P450_CS"/>
</dbReference>
<dbReference type="InterPro" id="IPR002401">
    <property type="entry name" value="Cyt_P450_E_grp-I"/>
</dbReference>
<dbReference type="InterPro" id="IPR008069">
    <property type="entry name" value="Cyt_P450_E_grp-I_CYP2D-like"/>
</dbReference>
<dbReference type="InterPro" id="IPR036396">
    <property type="entry name" value="Cyt_P450_sf"/>
</dbReference>
<dbReference type="InterPro" id="IPR050182">
    <property type="entry name" value="Cytochrome_P450_fam2"/>
</dbReference>
<dbReference type="PANTHER" id="PTHR24300:SF1">
    <property type="entry name" value="CYTOCHROME P450 2D6-RELATED"/>
    <property type="match status" value="1"/>
</dbReference>
<dbReference type="PANTHER" id="PTHR24300">
    <property type="entry name" value="CYTOCHROME P450 508A4-RELATED"/>
    <property type="match status" value="1"/>
</dbReference>
<dbReference type="Pfam" id="PF00067">
    <property type="entry name" value="p450"/>
    <property type="match status" value="1"/>
</dbReference>
<dbReference type="PRINTS" id="PR00463">
    <property type="entry name" value="EP450I"/>
</dbReference>
<dbReference type="PRINTS" id="PR01686">
    <property type="entry name" value="EP450ICYP2D"/>
</dbReference>
<dbReference type="PRINTS" id="PR00385">
    <property type="entry name" value="P450"/>
</dbReference>
<dbReference type="SUPFAM" id="SSF48264">
    <property type="entry name" value="Cytochrome P450"/>
    <property type="match status" value="1"/>
</dbReference>
<dbReference type="PROSITE" id="PS00086">
    <property type="entry name" value="CYTOCHROME_P450"/>
    <property type="match status" value="1"/>
</dbReference>
<evidence type="ECO:0000269" key="1">
    <source>
    </source>
</evidence>
<evidence type="ECO:0000269" key="2">
    <source>
    </source>
</evidence>
<evidence type="ECO:0000269" key="3">
    <source>
    </source>
</evidence>
<evidence type="ECO:0000269" key="4">
    <source>
    </source>
</evidence>
<evidence type="ECO:0000269" key="5">
    <source>
    </source>
</evidence>
<evidence type="ECO:0000269" key="6">
    <source>
    </source>
</evidence>
<evidence type="ECO:0000269" key="7">
    <source>
    </source>
</evidence>
<evidence type="ECO:0000269" key="8">
    <source>
    </source>
</evidence>
<evidence type="ECO:0000269" key="9">
    <source>
    </source>
</evidence>
<evidence type="ECO:0000269" key="10">
    <source>
    </source>
</evidence>
<evidence type="ECO:0000269" key="11">
    <source>
    </source>
</evidence>
<evidence type="ECO:0000269" key="12">
    <source>
    </source>
</evidence>
<evidence type="ECO:0000269" key="13">
    <source>
    </source>
</evidence>
<evidence type="ECO:0000269" key="14">
    <source>
    </source>
</evidence>
<evidence type="ECO:0000269" key="15">
    <source>
    </source>
</evidence>
<evidence type="ECO:0000269" key="16">
    <source>
    </source>
</evidence>
<evidence type="ECO:0000269" key="17">
    <source>
    </source>
</evidence>
<evidence type="ECO:0000269" key="18">
    <source>
    </source>
</evidence>
<evidence type="ECO:0000269" key="19">
    <source>
    </source>
</evidence>
<evidence type="ECO:0000269" key="20">
    <source ref="6"/>
</evidence>
<evidence type="ECO:0000303" key="21">
    <source>
    </source>
</evidence>
<evidence type="ECO:0000303" key="22">
    <source>
    </source>
</evidence>
<evidence type="ECO:0000303" key="23">
    <source>
    </source>
</evidence>
<evidence type="ECO:0000305" key="24"/>
<evidence type="ECO:0000305" key="25">
    <source>
    </source>
</evidence>
<evidence type="ECO:0000305" key="26">
    <source>
    </source>
</evidence>
<evidence type="ECO:0000305" key="27">
    <source>
    </source>
</evidence>
<evidence type="ECO:0000305" key="28">
    <source>
    </source>
</evidence>
<evidence type="ECO:0000305" key="29">
    <source>
    </source>
</evidence>
<evidence type="ECO:0000312" key="30">
    <source>
        <dbReference type="HGNC" id="HGNC:2625"/>
    </source>
</evidence>
<evidence type="ECO:0007829" key="31">
    <source>
        <dbReference type="PDB" id="3QM4"/>
    </source>
</evidence>
<evidence type="ECO:0007829" key="32">
    <source>
        <dbReference type="PDB" id="3TBG"/>
    </source>
</evidence>
<evidence type="ECO:0007829" key="33">
    <source>
        <dbReference type="PDB" id="4WNU"/>
    </source>
</evidence>
<evidence type="ECO:0007829" key="34">
    <source>
        <dbReference type="PDB" id="4WNV"/>
    </source>
</evidence>
<evidence type="ECO:0007829" key="35">
    <source>
        <dbReference type="PDB" id="4WNW"/>
    </source>
</evidence>
<evidence type="ECO:0007829" key="36">
    <source>
        <dbReference type="PDB" id="6CSD"/>
    </source>
</evidence>
<comment type="function">
    <text evidence="3 7 9 10 11 12 13">A cytochrome P450 monooxygenase involved in the metabolism of fatty acids, steroids and retinoids (PubMed:18698000, PubMed:19965576, PubMed:20972997, PubMed:21289075, PubMed:21576599). Mechanistically, uses molecular oxygen inserting one oxygen atom into a substrate, and reducing the second into a water molecule, with two electrons provided by NADPH via cytochrome P450 reductase (NADPH--hemoprotein reductase) (PubMed:18698000, PubMed:19965576, PubMed:20972997, PubMed:21289075, PubMed:21576599). Catalyzes the epoxidation of double bonds of polyunsaturated fatty acids (PUFA) (PubMed:19965576, PubMed:20972997). Metabolizes endocannabinoid arachidonoylethanolamide (anandamide) to 20-hydroxyeicosatetraenoic acid ethanolamide (20-HETE-EA) and 8,9-, 11,12-, and 14,15-epoxyeicosatrienoic acid ethanolamides (EpETrE-EAs), potentially modulating endocannabinoid system signaling (PubMed:18698000, PubMed:21289075). Catalyzes the hydroxylation of carbon-hydrogen bonds. Metabolizes cholesterol toward 25-hydroxycholesterol, a physiological regulator of cellular cholesterol homeostasis (PubMed:21576599). Catalyzes the oxidative transformations of all-trans retinol to all-trans retinal, a precursor for the active form all-trans-retinoic acid (PubMed:10681376). Also involved in the oxidative metabolism of drugs such as antiarrhythmics, adrenoceptor antagonists, and tricyclic antidepressants.</text>
</comment>
<comment type="catalytic activity">
    <reaction evidence="11">
        <text>(5Z,8Z,11Z,14Z)-eicosatetraenoate + reduced [NADPH--hemoprotein reductase] + O2 = (8R,9S)-epoxy-(5Z,11Z,14Z)-eicosatrienoate + oxidized [NADPH--hemoprotein reductase] + H2O + H(+)</text>
        <dbReference type="Rhea" id="RHEA:49884"/>
        <dbReference type="Rhea" id="RHEA-COMP:11964"/>
        <dbReference type="Rhea" id="RHEA-COMP:11965"/>
        <dbReference type="ChEBI" id="CHEBI:15377"/>
        <dbReference type="ChEBI" id="CHEBI:15378"/>
        <dbReference type="ChEBI" id="CHEBI:15379"/>
        <dbReference type="ChEBI" id="CHEBI:32395"/>
        <dbReference type="ChEBI" id="CHEBI:57618"/>
        <dbReference type="ChEBI" id="CHEBI:58210"/>
        <dbReference type="ChEBI" id="CHEBI:131975"/>
    </reaction>
    <physiologicalReaction direction="left-to-right" evidence="27">
        <dbReference type="Rhea" id="RHEA:49885"/>
    </physiologicalReaction>
</comment>
<comment type="catalytic activity">
    <reaction evidence="11">
        <text>(5Z,8Z,11Z,14Z)-eicosatetraenoate + reduced [NADPH--hemoprotein reductase] + O2 = (11R,12S)-epoxy-(5Z,8Z,14Z)-eicosatrienoate + oxidized [NADPH--hemoprotein reductase] + H2O + H(+)</text>
        <dbReference type="Rhea" id="RHEA:49880"/>
        <dbReference type="Rhea" id="RHEA-COMP:11964"/>
        <dbReference type="Rhea" id="RHEA-COMP:11965"/>
        <dbReference type="ChEBI" id="CHEBI:15377"/>
        <dbReference type="ChEBI" id="CHEBI:15378"/>
        <dbReference type="ChEBI" id="CHEBI:15379"/>
        <dbReference type="ChEBI" id="CHEBI:32395"/>
        <dbReference type="ChEBI" id="CHEBI:57618"/>
        <dbReference type="ChEBI" id="CHEBI:58210"/>
        <dbReference type="ChEBI" id="CHEBI:131970"/>
    </reaction>
    <physiologicalReaction direction="left-to-right" evidence="27">
        <dbReference type="Rhea" id="RHEA:49881"/>
    </physiologicalReaction>
</comment>
<comment type="catalytic activity">
    <reaction evidence="10 11">
        <text>(5Z,8Z,11Z,14Z)-eicosatetraenoate + reduced [NADPH--hemoprotein reductase] + O2 = (14S,15R)-epoxy-(5Z,8Z,11Z)-eicosatrienoate + oxidized [NADPH--hemoprotein reductase] + H2O + H(+)</text>
        <dbReference type="Rhea" id="RHEA:49856"/>
        <dbReference type="Rhea" id="RHEA-COMP:11964"/>
        <dbReference type="Rhea" id="RHEA-COMP:11965"/>
        <dbReference type="ChEBI" id="CHEBI:15377"/>
        <dbReference type="ChEBI" id="CHEBI:15378"/>
        <dbReference type="ChEBI" id="CHEBI:15379"/>
        <dbReference type="ChEBI" id="CHEBI:32395"/>
        <dbReference type="ChEBI" id="CHEBI:57618"/>
        <dbReference type="ChEBI" id="CHEBI:58210"/>
        <dbReference type="ChEBI" id="CHEBI:131964"/>
    </reaction>
    <physiologicalReaction direction="left-to-right" evidence="27">
        <dbReference type="Rhea" id="RHEA:49857"/>
    </physiologicalReaction>
</comment>
<comment type="catalytic activity">
    <reaction evidence="9 12">
        <text>N-(5Z,8Z,11Z,14Z-eicosatetraenoyl)-ethanolamine + reduced [NADPH--hemoprotein reductase] + O2 = N-(8,9-epoxy-5Z,11Z,14Z-eicosatrienoyl)-ethanolamine + oxidized [NADPH--hemoprotein reductase] + H2O + H(+)</text>
        <dbReference type="Rhea" id="RHEA:53140"/>
        <dbReference type="Rhea" id="RHEA-COMP:11964"/>
        <dbReference type="Rhea" id="RHEA-COMP:11965"/>
        <dbReference type="ChEBI" id="CHEBI:2700"/>
        <dbReference type="ChEBI" id="CHEBI:15377"/>
        <dbReference type="ChEBI" id="CHEBI:15378"/>
        <dbReference type="ChEBI" id="CHEBI:15379"/>
        <dbReference type="ChEBI" id="CHEBI:57618"/>
        <dbReference type="ChEBI" id="CHEBI:58210"/>
        <dbReference type="ChEBI" id="CHEBI:136989"/>
    </reaction>
    <physiologicalReaction direction="left-to-right" evidence="28">
        <dbReference type="Rhea" id="RHEA:53141"/>
    </physiologicalReaction>
</comment>
<comment type="catalytic activity">
    <reaction evidence="9 12">
        <text>N-(5Z,8Z,11Z,14Z-eicosatetraenoyl)-ethanolamine + reduced [NADPH--hemoprotein reductase] + O2 = N-(11,12-epoxy-5Z,8Z,14Z-eicosatrienoyl)-ethanolamine + oxidized [NADPH--hemoprotein reductase] + H2O + H(+)</text>
        <dbReference type="Rhea" id="RHEA:53144"/>
        <dbReference type="Rhea" id="RHEA-COMP:11964"/>
        <dbReference type="Rhea" id="RHEA-COMP:11965"/>
        <dbReference type="ChEBI" id="CHEBI:2700"/>
        <dbReference type="ChEBI" id="CHEBI:15377"/>
        <dbReference type="ChEBI" id="CHEBI:15378"/>
        <dbReference type="ChEBI" id="CHEBI:15379"/>
        <dbReference type="ChEBI" id="CHEBI:57618"/>
        <dbReference type="ChEBI" id="CHEBI:58210"/>
        <dbReference type="ChEBI" id="CHEBI:136990"/>
    </reaction>
    <physiologicalReaction direction="left-to-right" evidence="28">
        <dbReference type="Rhea" id="RHEA:53145"/>
    </physiologicalReaction>
</comment>
<comment type="catalytic activity">
    <reaction evidence="9 12">
        <text>N-(5Z,8Z,11Z,14Z-eicosatetraenoyl)-ethanolamine + reduced [NADPH--hemoprotein reductase] + O2 = N-(14,15-epoxy-5Z,8Z,11Z-eicosatrienoyl)-ethanolamine + oxidized [NADPH--hemoprotein reductase] + H2O + H(+)</text>
        <dbReference type="Rhea" id="RHEA:53148"/>
        <dbReference type="Rhea" id="RHEA-COMP:11964"/>
        <dbReference type="Rhea" id="RHEA-COMP:11965"/>
        <dbReference type="ChEBI" id="CHEBI:2700"/>
        <dbReference type="ChEBI" id="CHEBI:15377"/>
        <dbReference type="ChEBI" id="CHEBI:15378"/>
        <dbReference type="ChEBI" id="CHEBI:15379"/>
        <dbReference type="ChEBI" id="CHEBI:57618"/>
        <dbReference type="ChEBI" id="CHEBI:58210"/>
        <dbReference type="ChEBI" id="CHEBI:136991"/>
    </reaction>
    <physiologicalReaction direction="left-to-right" evidence="28">
        <dbReference type="Rhea" id="RHEA:53149"/>
    </physiologicalReaction>
</comment>
<comment type="catalytic activity">
    <reaction evidence="9 12">
        <text>N-(5Z,8Z,11Z,14Z-eicosatetraenoyl)-ethanolamine + reduced [NADPH--hemoprotein reductase] + O2 = N-(20-hydroxy-5Z,8Z,11Z,14Z-eicosatetraenoyl)-ethanolamine + oxidized [NADPH--hemoprotein reductase] + H2O + H(+)</text>
        <dbReference type="Rhea" id="RHEA:53152"/>
        <dbReference type="Rhea" id="RHEA-COMP:11964"/>
        <dbReference type="Rhea" id="RHEA-COMP:11965"/>
        <dbReference type="ChEBI" id="CHEBI:2700"/>
        <dbReference type="ChEBI" id="CHEBI:15377"/>
        <dbReference type="ChEBI" id="CHEBI:15378"/>
        <dbReference type="ChEBI" id="CHEBI:15379"/>
        <dbReference type="ChEBI" id="CHEBI:57618"/>
        <dbReference type="ChEBI" id="CHEBI:58210"/>
        <dbReference type="ChEBI" id="CHEBI:136992"/>
    </reaction>
    <physiologicalReaction direction="left-to-right" evidence="28">
        <dbReference type="Rhea" id="RHEA:53153"/>
    </physiologicalReaction>
</comment>
<comment type="catalytic activity">
    <reaction evidence="10">
        <text>(5Z,8Z,11Z,14Z,17Z)-eicosapentaenoate + reduced [NADPH--hemoprotein reductase] + O2 = (17S,18R)-epoxy-(5Z,8Z,11Z,14Z)-eicosatetraenoate + oxidized [NADPH--hemoprotein reductase] + H2O + H(+)</text>
        <dbReference type="Rhea" id="RHEA:39783"/>
        <dbReference type="Rhea" id="RHEA-COMP:11964"/>
        <dbReference type="Rhea" id="RHEA-COMP:11965"/>
        <dbReference type="ChEBI" id="CHEBI:15377"/>
        <dbReference type="ChEBI" id="CHEBI:15378"/>
        <dbReference type="ChEBI" id="CHEBI:15379"/>
        <dbReference type="ChEBI" id="CHEBI:57618"/>
        <dbReference type="ChEBI" id="CHEBI:58210"/>
        <dbReference type="ChEBI" id="CHEBI:58562"/>
        <dbReference type="ChEBI" id="CHEBI:76635"/>
    </reaction>
    <physiologicalReaction direction="left-to-right" evidence="26">
        <dbReference type="Rhea" id="RHEA:39784"/>
    </physiologicalReaction>
</comment>
<comment type="catalytic activity">
    <reaction evidence="10">
        <text>(4Z,7Z,10Z,13Z,16Z,19Z)-docosahexaenoate + reduced [NADPH--hemoprotein reductase] + O2 = (19R,20S)-epoxy-(4Z,7Z,10Z,13Z,16Z)-docosapentaenoate + oxidized [NADPH--hemoprotein reductase] + H2O + H(+)</text>
        <dbReference type="Rhea" id="RHEA:52120"/>
        <dbReference type="Rhea" id="RHEA-COMP:11964"/>
        <dbReference type="Rhea" id="RHEA-COMP:11965"/>
        <dbReference type="ChEBI" id="CHEBI:15377"/>
        <dbReference type="ChEBI" id="CHEBI:15378"/>
        <dbReference type="ChEBI" id="CHEBI:15379"/>
        <dbReference type="ChEBI" id="CHEBI:57618"/>
        <dbReference type="ChEBI" id="CHEBI:58210"/>
        <dbReference type="ChEBI" id="CHEBI:77016"/>
        <dbReference type="ChEBI" id="CHEBI:136410"/>
    </reaction>
    <physiologicalReaction direction="left-to-right" evidence="26">
        <dbReference type="Rhea" id="RHEA:52121"/>
    </physiologicalReaction>
</comment>
<comment type="catalytic activity">
    <reaction evidence="10">
        <text>(4Z,7Z,10Z,13Z,16Z,19Z)-docosahexaenoate + reduced [NADPH--hemoprotein reductase] + O2 = (19S,20R)-epoxy-(4Z,7Z,10Z,13Z,16Z)-docosapentaenoate + oxidized [NADPH--hemoprotein reductase] + H2O + H(+)</text>
        <dbReference type="Rhea" id="RHEA:52124"/>
        <dbReference type="Rhea" id="RHEA-COMP:11964"/>
        <dbReference type="Rhea" id="RHEA-COMP:11965"/>
        <dbReference type="ChEBI" id="CHEBI:15377"/>
        <dbReference type="ChEBI" id="CHEBI:15378"/>
        <dbReference type="ChEBI" id="CHEBI:15379"/>
        <dbReference type="ChEBI" id="CHEBI:57618"/>
        <dbReference type="ChEBI" id="CHEBI:58210"/>
        <dbReference type="ChEBI" id="CHEBI:77016"/>
        <dbReference type="ChEBI" id="CHEBI:136411"/>
    </reaction>
    <physiologicalReaction direction="left-to-right" evidence="26">
        <dbReference type="Rhea" id="RHEA:52125"/>
    </physiologicalReaction>
</comment>
<comment type="catalytic activity">
    <reaction evidence="13">
        <text>cholesterol + reduced [NADPH--hemoprotein reductase] + O2 = 25-hydroxycholesterol + oxidized [NADPH--hemoprotein reductase] + H2O + H(+)</text>
        <dbReference type="Rhea" id="RHEA:50256"/>
        <dbReference type="Rhea" id="RHEA-COMP:11964"/>
        <dbReference type="Rhea" id="RHEA-COMP:11965"/>
        <dbReference type="ChEBI" id="CHEBI:15377"/>
        <dbReference type="ChEBI" id="CHEBI:15378"/>
        <dbReference type="ChEBI" id="CHEBI:15379"/>
        <dbReference type="ChEBI" id="CHEBI:16113"/>
        <dbReference type="ChEBI" id="CHEBI:42977"/>
        <dbReference type="ChEBI" id="CHEBI:57618"/>
        <dbReference type="ChEBI" id="CHEBI:58210"/>
    </reaction>
    <physiologicalReaction direction="left-to-right" evidence="29">
        <dbReference type="Rhea" id="RHEA:50257"/>
    </physiologicalReaction>
</comment>
<comment type="catalytic activity">
    <reaction evidence="3">
        <text>all-trans-retinol + reduced [NADPH--hemoprotein reductase] + O2 = all-trans-retinal + oxidized [NADPH--hemoprotein reductase] + 2 H2O + H(+)</text>
        <dbReference type="Rhea" id="RHEA:42092"/>
        <dbReference type="Rhea" id="RHEA-COMP:11964"/>
        <dbReference type="Rhea" id="RHEA-COMP:11965"/>
        <dbReference type="ChEBI" id="CHEBI:15377"/>
        <dbReference type="ChEBI" id="CHEBI:15378"/>
        <dbReference type="ChEBI" id="CHEBI:15379"/>
        <dbReference type="ChEBI" id="CHEBI:17336"/>
        <dbReference type="ChEBI" id="CHEBI:17898"/>
        <dbReference type="ChEBI" id="CHEBI:57618"/>
        <dbReference type="ChEBI" id="CHEBI:58210"/>
    </reaction>
    <physiologicalReaction direction="left-to-right" evidence="25">
        <dbReference type="Rhea" id="RHEA:42093"/>
    </physiologicalReaction>
</comment>
<comment type="cofactor">
    <cofactor>
        <name>heme</name>
        <dbReference type="ChEBI" id="CHEBI:30413"/>
    </cofactor>
</comment>
<comment type="biophysicochemical properties">
    <kinetics>
        <KM evidence="3">67 uM for all-trans retinol</KM>
        <KM evidence="9">1.3 uM for anandamide (oxidation to 20-HETE)</KM>
        <KM evidence="9">2.1 uM for anandamide (oxidation to 8,9-EpETrE-EA)</KM>
        <KM evidence="9">2.6 uM for anandamide (oxidation to 11,12-EpETrE-EA)</KM>
        <KM evidence="9">2.8 uM for anandamide (oxidation to 14,15-EpETrE-EA)</KM>
        <Vmax evidence="3">193.0 pmol/min/nmol enzyme toward all-trans retinol</Vmax>
        <Vmax evidence="9">3.7 pmol/min/nmol enzyme toward anandamide (oxidation to 20-HETE)</Vmax>
        <Vmax evidence="9">1.6 pmol/min/nmol enzyme toward anandamide (oxidation to 8,9-EpETrE-EA)</Vmax>
        <Vmax evidence="9">1.1 pmol/min/nmol enzyme toward anandamide (oxidation to 11,12-EpETrE-EA)</Vmax>
        <Vmax evidence="9">1.3 pmol/min/nmol enzyme toward anandamide (oxidation to 14,15-EpETrE-EA)</Vmax>
    </kinetics>
</comment>
<comment type="pathway">
    <text evidence="3">Cofactor metabolism; retinol metabolism.</text>
</comment>
<comment type="pathway">
    <text evidence="10 11">Lipid metabolism; fatty acid metabolism.</text>
</comment>
<comment type="pathway">
    <text evidence="13">Steroid metabolism; cholesterol metabolism.</text>
</comment>
<comment type="subcellular location">
    <subcellularLocation>
        <location>Endoplasmic reticulum membrane</location>
        <topology>Peripheral membrane protein</topology>
    </subcellularLocation>
    <subcellularLocation>
        <location evidence="13">Microsome membrane</location>
        <topology>Peripheral membrane protein</topology>
    </subcellularLocation>
</comment>
<comment type="alternative products">
    <event type="alternative splicing"/>
    <isoform>
        <id>P10635-1</id>
        <name>1</name>
        <sequence type="displayed"/>
    </isoform>
    <isoform>
        <id>P10635-2</id>
        <name>2</name>
        <sequence type="described" ref="VSP_044486"/>
    </isoform>
</comment>
<comment type="induction">
    <text>By pregnancy.</text>
</comment>
<comment type="polymorphism">
    <text evidence="1 6 7 8 14 15 16 18 19">Genetic variations in CYP2D6 are the cause of poor drug metabolism CYP2D6-related [MIM:608902]. The CYP2D6 gene is highly polymorphic. CYP2D6 activity ranges widely within a population comprising ultrarapid (UM), extensive (EM), intermediate (IM) and poor (PM) metabolizer phenotypes. UM and PM are those most at risk for treatment failure or dose-dependent drug toxicity, respectively. Of the Caucasian populations of Europe and North America, 5%-10% are of the PM phenotype and are unable to metabolize the antihypersensitive drug debrisoquine and numerous other drugs. Different alleles are known, including CYP2D6*1 (PubMed:15768052), CYP2D6*2 (PubMed:25469868), CYP2D6*6B/6C (PubMed:7868129), CYP2D6*7 also known CYP2D6E (PubMed:7845481), CYP2D6*9 also known CYP2D6C (PubMed:1844820), CYP2D6*10 also known CYP2D6J (PubMed:8287064, PubMed:25469868), CYP2D6*12 (PubMed:8655150), CYP2D6*14 (PubMed:10064570), CYP2D6*17 also known CYP2D6Z (PubMed:8971426), CYP2D6*41B (PubMed:15768052), CYP2D6*45A (PubMed:15768052), CYP2D6*45B (PubMed:15768052), CYP2D6*46 (PubMed:15768052), CYP2D6*87 (PubMed:25469868), CYP2D6*88 (PubMed:25469868), CYP2D6*89 (PubMed:25469868), CYP2D6*90 (PubMed:25469868), CYP2D6*91 (PubMed:25469868), CYP2D6*93 (PubMed:25469868), C CYP2D6*94 (PubMed:25469868), CYP2D6*97 (PubMed:25469868) and CYP2D6*98 (PubMed:25469868). Isozymes CYP2D6.45 (Lys-155, Cys-296 and Thr-486) and CYP2D6.46 (His-26, Lys-155, Cys-296 and Thr-486) are functional (PubMed:15768052). The sequence shown is that of isozyme CYP2D6.1 corresponding to allele CYP2D6*1.</text>
</comment>
<comment type="similarity">
    <text evidence="24">Belongs to the cytochrome P450 family.</text>
</comment>
<comment type="online information" name="PharmVar Pharmacogen Variation Consortium">
    <link uri="https://www.pharmvar.org/gene/CYP2D6"/>
    <text>CYP2D6 alleles</text>
</comment>
<comment type="online information" name="Wikipedia">
    <link uri="https://en.wikipedia.org/wiki/CYP2D6"/>
    <text>CYP2D6 entry</text>
</comment>
<protein>
    <recommendedName>
        <fullName evidence="22">Cytochrome P450 2D6</fullName>
        <ecNumber evidence="9 12">1.14.14.-</ecNumber>
    </recommendedName>
    <alternativeName>
        <fullName>CYPIID6</fullName>
    </alternativeName>
    <alternativeName>
        <fullName evidence="29">Cholesterol 25-hydroxylase</fullName>
    </alternativeName>
    <alternativeName>
        <fullName>Cytochrome P450-DB1</fullName>
    </alternativeName>
    <alternativeName>
        <fullName>Debrisoquine 4-hydroxylase</fullName>
    </alternativeName>
</protein>
<organism>
    <name type="scientific">Homo sapiens</name>
    <name type="common">Human</name>
    <dbReference type="NCBI Taxonomy" id="9606"/>
    <lineage>
        <taxon>Eukaryota</taxon>
        <taxon>Metazoa</taxon>
        <taxon>Chordata</taxon>
        <taxon>Craniata</taxon>
        <taxon>Vertebrata</taxon>
        <taxon>Euteleostomi</taxon>
        <taxon>Mammalia</taxon>
        <taxon>Eutheria</taxon>
        <taxon>Euarchontoglires</taxon>
        <taxon>Primates</taxon>
        <taxon>Haplorrhini</taxon>
        <taxon>Catarrhini</taxon>
        <taxon>Hominidae</taxon>
        <taxon>Homo</taxon>
    </lineage>
</organism>
<keyword id="KW-0002">3D-structure</keyword>
<keyword id="KW-0025">Alternative splicing</keyword>
<keyword id="KW-0153">Cholesterol metabolism</keyword>
<keyword id="KW-0256">Endoplasmic reticulum</keyword>
<keyword id="KW-0276">Fatty acid metabolism</keyword>
<keyword id="KW-0349">Heme</keyword>
<keyword id="KW-0408">Iron</keyword>
<keyword id="KW-0443">Lipid metabolism</keyword>
<keyword id="KW-0472">Membrane</keyword>
<keyword id="KW-0479">Metal-binding</keyword>
<keyword id="KW-0492">Microsome</keyword>
<keyword id="KW-0503">Monooxygenase</keyword>
<keyword id="KW-0560">Oxidoreductase</keyword>
<keyword id="KW-1267">Proteomics identification</keyword>
<keyword id="KW-1185">Reference proteome</keyword>
<keyword id="KW-0753">Steroid metabolism</keyword>
<keyword id="KW-1207">Sterol metabolism</keyword>
<sequence length="497" mass="55769">MGLEALVPLAVIVAIFLLLVDLMHRRQRWAARYPPGPLPLPGLGNLLHVDFQNTPYCFDQLRRRFGDVFSLQLAWTPVVVLNGLAAVREALVTHGEDTADRPPVPITQILGFGPRSQGVFLARYGPAWREQRRFSVSTLRNLGLGKKSLEQWVTEEAACLCAAFANHSGRPFRPNGLLDKAVSNVIASLTCGRRFEYDDPRFLRLLDLAQEGLKEESGFLREVLNAVPVLLHIPALAGKVLRFQKAFLTQLDELLTEHRMTWDPAQPPRDLTEAFLAEMEKAKGNPESSFNDENLRIVVADLFSAGMVTTSTTLAWGLLLMILHPDVQRRVQQEIDDVIGQVRRPEMGDQAHMPYTTAVIHEVQRFGDIVPLGVTHMTSRDIEVQGFRIPKGTTLITNLSSVLKDEAVWEKPFRFHPEHFLDAQGHFVKPEAFLPFSAGRRACLGEPLARMELFLFFTSLLQHFSFSVPTGQPRPSHHGVFAFLVSPSPYELCAVPR</sequence>
<proteinExistence type="evidence at protein level"/>